<reference key="1">
    <citation type="journal article" date="1999" name="Oncogene">
        <title>The cloning, mapping and expression of a novel gene, BRL, related to the AF10 leukaemia gene.</title>
        <authorList>
            <person name="McCullagh P."/>
            <person name="Chaplin T."/>
            <person name="Meerabux J."/>
            <person name="Grenzelias D."/>
            <person name="Lillington D."/>
            <person name="Poulsom R."/>
            <person name="Gregorini A."/>
            <person name="Saha V."/>
            <person name="Young B.D."/>
        </authorList>
    </citation>
    <scope>NUCLEOTIDE SEQUENCE [GENOMIC DNA / MRNA] (ISOFORM 1)</scope>
    <scope>TISSUE SPECIFICITY</scope>
</reference>
<reference key="2">
    <citation type="journal article" date="2004" name="Genome Biol.">
        <title>A genome annotation-driven approach to cloning the human ORFeome.</title>
        <authorList>
            <person name="Collins J.E."/>
            <person name="Wright C.L."/>
            <person name="Edwards C.A."/>
            <person name="Davis M.P."/>
            <person name="Grinham J.A."/>
            <person name="Cole C.G."/>
            <person name="Goward M.E."/>
            <person name="Aguado B."/>
            <person name="Mallya M."/>
            <person name="Mokrab Y."/>
            <person name="Huckle E.J."/>
            <person name="Beare D.M."/>
            <person name="Dunham I."/>
        </authorList>
    </citation>
    <scope>NUCLEOTIDE SEQUENCE [LARGE SCALE MRNA] (ISOFORM 1)</scope>
</reference>
<reference key="3">
    <citation type="journal article" date="2004" name="Nat. Genet.">
        <title>Complete sequencing and characterization of 21,243 full-length human cDNAs.</title>
        <authorList>
            <person name="Ota T."/>
            <person name="Suzuki Y."/>
            <person name="Nishikawa T."/>
            <person name="Otsuki T."/>
            <person name="Sugiyama T."/>
            <person name="Irie R."/>
            <person name="Wakamatsu A."/>
            <person name="Hayashi K."/>
            <person name="Sato H."/>
            <person name="Nagai K."/>
            <person name="Kimura K."/>
            <person name="Makita H."/>
            <person name="Sekine M."/>
            <person name="Obayashi M."/>
            <person name="Nishi T."/>
            <person name="Shibahara T."/>
            <person name="Tanaka T."/>
            <person name="Ishii S."/>
            <person name="Yamamoto J."/>
            <person name="Saito K."/>
            <person name="Kawai Y."/>
            <person name="Isono Y."/>
            <person name="Nakamura Y."/>
            <person name="Nagahari K."/>
            <person name="Murakami K."/>
            <person name="Yasuda T."/>
            <person name="Iwayanagi T."/>
            <person name="Wagatsuma M."/>
            <person name="Shiratori A."/>
            <person name="Sudo H."/>
            <person name="Hosoiri T."/>
            <person name="Kaku Y."/>
            <person name="Kodaira H."/>
            <person name="Kondo H."/>
            <person name="Sugawara M."/>
            <person name="Takahashi M."/>
            <person name="Kanda K."/>
            <person name="Yokoi T."/>
            <person name="Furuya T."/>
            <person name="Kikkawa E."/>
            <person name="Omura Y."/>
            <person name="Abe K."/>
            <person name="Kamihara K."/>
            <person name="Katsuta N."/>
            <person name="Sato K."/>
            <person name="Tanikawa M."/>
            <person name="Yamazaki M."/>
            <person name="Ninomiya K."/>
            <person name="Ishibashi T."/>
            <person name="Yamashita H."/>
            <person name="Murakawa K."/>
            <person name="Fujimori K."/>
            <person name="Tanai H."/>
            <person name="Kimata M."/>
            <person name="Watanabe M."/>
            <person name="Hiraoka S."/>
            <person name="Chiba Y."/>
            <person name="Ishida S."/>
            <person name="Ono Y."/>
            <person name="Takiguchi S."/>
            <person name="Watanabe S."/>
            <person name="Yosida M."/>
            <person name="Hotuta T."/>
            <person name="Kusano J."/>
            <person name="Kanehori K."/>
            <person name="Takahashi-Fujii A."/>
            <person name="Hara H."/>
            <person name="Tanase T.-O."/>
            <person name="Nomura Y."/>
            <person name="Togiya S."/>
            <person name="Komai F."/>
            <person name="Hara R."/>
            <person name="Takeuchi K."/>
            <person name="Arita M."/>
            <person name="Imose N."/>
            <person name="Musashino K."/>
            <person name="Yuuki H."/>
            <person name="Oshima A."/>
            <person name="Sasaki N."/>
            <person name="Aotsuka S."/>
            <person name="Yoshikawa Y."/>
            <person name="Matsunawa H."/>
            <person name="Ichihara T."/>
            <person name="Shiohata N."/>
            <person name="Sano S."/>
            <person name="Moriya S."/>
            <person name="Momiyama H."/>
            <person name="Satoh N."/>
            <person name="Takami S."/>
            <person name="Terashima Y."/>
            <person name="Suzuki O."/>
            <person name="Nakagawa S."/>
            <person name="Senoh A."/>
            <person name="Mizoguchi H."/>
            <person name="Goto Y."/>
            <person name="Shimizu F."/>
            <person name="Wakebe H."/>
            <person name="Hishigaki H."/>
            <person name="Watanabe T."/>
            <person name="Sugiyama A."/>
            <person name="Takemoto M."/>
            <person name="Kawakami B."/>
            <person name="Yamazaki M."/>
            <person name="Watanabe K."/>
            <person name="Kumagai A."/>
            <person name="Itakura S."/>
            <person name="Fukuzumi Y."/>
            <person name="Fujimori Y."/>
            <person name="Komiyama M."/>
            <person name="Tashiro H."/>
            <person name="Tanigami A."/>
            <person name="Fujiwara T."/>
            <person name="Ono T."/>
            <person name="Yamada K."/>
            <person name="Fujii Y."/>
            <person name="Ozaki K."/>
            <person name="Hirao M."/>
            <person name="Ohmori Y."/>
            <person name="Kawabata A."/>
            <person name="Hikiji T."/>
            <person name="Kobatake N."/>
            <person name="Inagaki H."/>
            <person name="Ikema Y."/>
            <person name="Okamoto S."/>
            <person name="Okitani R."/>
            <person name="Kawakami T."/>
            <person name="Noguchi S."/>
            <person name="Itoh T."/>
            <person name="Shigeta K."/>
            <person name="Senba T."/>
            <person name="Matsumura K."/>
            <person name="Nakajima Y."/>
            <person name="Mizuno T."/>
            <person name="Morinaga M."/>
            <person name="Sasaki M."/>
            <person name="Togashi T."/>
            <person name="Oyama M."/>
            <person name="Hata H."/>
            <person name="Watanabe M."/>
            <person name="Komatsu T."/>
            <person name="Mizushima-Sugano J."/>
            <person name="Satoh T."/>
            <person name="Shirai Y."/>
            <person name="Takahashi Y."/>
            <person name="Nakagawa K."/>
            <person name="Okumura K."/>
            <person name="Nagase T."/>
            <person name="Nomura N."/>
            <person name="Kikuchi H."/>
            <person name="Masuho Y."/>
            <person name="Yamashita R."/>
            <person name="Nakai K."/>
            <person name="Yada T."/>
            <person name="Nakamura Y."/>
            <person name="Ohara O."/>
            <person name="Isogai T."/>
            <person name="Sugano S."/>
        </authorList>
    </citation>
    <scope>NUCLEOTIDE SEQUENCE [LARGE SCALE MRNA] (ISOFORM 2)</scope>
</reference>
<reference key="4">
    <citation type="journal article" date="1999" name="Nature">
        <title>The DNA sequence of human chromosome 22.</title>
        <authorList>
            <person name="Dunham I."/>
            <person name="Hunt A.R."/>
            <person name="Collins J.E."/>
            <person name="Bruskiewich R."/>
            <person name="Beare D.M."/>
            <person name="Clamp M."/>
            <person name="Smink L.J."/>
            <person name="Ainscough R."/>
            <person name="Almeida J.P."/>
            <person name="Babbage A.K."/>
            <person name="Bagguley C."/>
            <person name="Bailey J."/>
            <person name="Barlow K.F."/>
            <person name="Bates K.N."/>
            <person name="Beasley O.P."/>
            <person name="Bird C.P."/>
            <person name="Blakey S.E."/>
            <person name="Bridgeman A.M."/>
            <person name="Buck D."/>
            <person name="Burgess J."/>
            <person name="Burrill W.D."/>
            <person name="Burton J."/>
            <person name="Carder C."/>
            <person name="Carter N.P."/>
            <person name="Chen Y."/>
            <person name="Clark G."/>
            <person name="Clegg S.M."/>
            <person name="Cobley V.E."/>
            <person name="Cole C.G."/>
            <person name="Collier R.E."/>
            <person name="Connor R."/>
            <person name="Conroy D."/>
            <person name="Corby N.R."/>
            <person name="Coville G.J."/>
            <person name="Cox A.V."/>
            <person name="Davis J."/>
            <person name="Dawson E."/>
            <person name="Dhami P.D."/>
            <person name="Dockree C."/>
            <person name="Dodsworth S.J."/>
            <person name="Durbin R.M."/>
            <person name="Ellington A.G."/>
            <person name="Evans K.L."/>
            <person name="Fey J.M."/>
            <person name="Fleming K."/>
            <person name="French L."/>
            <person name="Garner A.A."/>
            <person name="Gilbert J.G.R."/>
            <person name="Goward M.E."/>
            <person name="Grafham D.V."/>
            <person name="Griffiths M.N.D."/>
            <person name="Hall C."/>
            <person name="Hall R.E."/>
            <person name="Hall-Tamlyn G."/>
            <person name="Heathcott R.W."/>
            <person name="Ho S."/>
            <person name="Holmes S."/>
            <person name="Hunt S.E."/>
            <person name="Jones M.C."/>
            <person name="Kershaw J."/>
            <person name="Kimberley A.M."/>
            <person name="King A."/>
            <person name="Laird G.K."/>
            <person name="Langford C.F."/>
            <person name="Leversha M.A."/>
            <person name="Lloyd C."/>
            <person name="Lloyd D.M."/>
            <person name="Martyn I.D."/>
            <person name="Mashreghi-Mohammadi M."/>
            <person name="Matthews L.H."/>
            <person name="Mccann O.T."/>
            <person name="Mcclay J."/>
            <person name="Mclaren S."/>
            <person name="McMurray A.A."/>
            <person name="Milne S.A."/>
            <person name="Mortimore B.J."/>
            <person name="Odell C.N."/>
            <person name="Pavitt R."/>
            <person name="Pearce A.V."/>
            <person name="Pearson D."/>
            <person name="Phillimore B.J.C.T."/>
            <person name="Phillips S.H."/>
            <person name="Plumb R.W."/>
            <person name="Ramsay H."/>
            <person name="Ramsey Y."/>
            <person name="Rogers L."/>
            <person name="Ross M.T."/>
            <person name="Scott C.E."/>
            <person name="Sehra H.K."/>
            <person name="Skuce C.D."/>
            <person name="Smalley S."/>
            <person name="Smith M.L."/>
            <person name="Soderlund C."/>
            <person name="Spragon L."/>
            <person name="Steward C.A."/>
            <person name="Sulston J.E."/>
            <person name="Swann R.M."/>
            <person name="Vaudin M."/>
            <person name="Wall M."/>
            <person name="Wallis J.M."/>
            <person name="Whiteley M.N."/>
            <person name="Willey D.L."/>
            <person name="Williams L."/>
            <person name="Williams S.A."/>
            <person name="Williamson H."/>
            <person name="Wilmer T.E."/>
            <person name="Wilming L."/>
            <person name="Wright C.L."/>
            <person name="Hubbard T."/>
            <person name="Bentley D.R."/>
            <person name="Beck S."/>
            <person name="Rogers J."/>
            <person name="Shimizu N."/>
            <person name="Minoshima S."/>
            <person name="Kawasaki K."/>
            <person name="Sasaki T."/>
            <person name="Asakawa S."/>
            <person name="Kudoh J."/>
            <person name="Shintani A."/>
            <person name="Shibuya K."/>
            <person name="Yoshizaki Y."/>
            <person name="Aoki N."/>
            <person name="Mitsuyama S."/>
            <person name="Roe B.A."/>
            <person name="Chen F."/>
            <person name="Chu L."/>
            <person name="Crabtree J."/>
            <person name="Deschamps S."/>
            <person name="Do A."/>
            <person name="Do T."/>
            <person name="Dorman A."/>
            <person name="Fang F."/>
            <person name="Fu Y."/>
            <person name="Hu P."/>
            <person name="Hua A."/>
            <person name="Kenton S."/>
            <person name="Lai H."/>
            <person name="Lao H.I."/>
            <person name="Lewis J."/>
            <person name="Lewis S."/>
            <person name="Lin S.-P."/>
            <person name="Loh P."/>
            <person name="Malaj E."/>
            <person name="Nguyen T."/>
            <person name="Pan H."/>
            <person name="Phan S."/>
            <person name="Qi S."/>
            <person name="Qian Y."/>
            <person name="Ray L."/>
            <person name="Ren Q."/>
            <person name="Shaull S."/>
            <person name="Sloan D."/>
            <person name="Song L."/>
            <person name="Wang Q."/>
            <person name="Wang Y."/>
            <person name="Wang Z."/>
            <person name="White J."/>
            <person name="Willingham D."/>
            <person name="Wu H."/>
            <person name="Yao Z."/>
            <person name="Zhan M."/>
            <person name="Zhang G."/>
            <person name="Chissoe S."/>
            <person name="Murray J."/>
            <person name="Miller N."/>
            <person name="Minx P."/>
            <person name="Fulton R."/>
            <person name="Johnson D."/>
            <person name="Bemis G."/>
            <person name="Bentley D."/>
            <person name="Bradshaw H."/>
            <person name="Bourne S."/>
            <person name="Cordes M."/>
            <person name="Du Z."/>
            <person name="Fulton L."/>
            <person name="Goela D."/>
            <person name="Graves T."/>
            <person name="Hawkins J."/>
            <person name="Hinds K."/>
            <person name="Kemp K."/>
            <person name="Latreille P."/>
            <person name="Layman D."/>
            <person name="Ozersky P."/>
            <person name="Rohlfing T."/>
            <person name="Scheet P."/>
            <person name="Walker C."/>
            <person name="Wamsley A."/>
            <person name="Wohldmann P."/>
            <person name="Pepin K."/>
            <person name="Nelson J."/>
            <person name="Korf I."/>
            <person name="Bedell J.A."/>
            <person name="Hillier L.W."/>
            <person name="Mardis E."/>
            <person name="Waterston R."/>
            <person name="Wilson R."/>
            <person name="Emanuel B.S."/>
            <person name="Shaikh T."/>
            <person name="Kurahashi H."/>
            <person name="Saitta S."/>
            <person name="Budarf M.L."/>
            <person name="McDermid H.E."/>
            <person name="Johnson A."/>
            <person name="Wong A.C.C."/>
            <person name="Morrow B.E."/>
            <person name="Edelmann L."/>
            <person name="Kim U.J."/>
            <person name="Shizuya H."/>
            <person name="Simon M.I."/>
            <person name="Dumanski J.P."/>
            <person name="Peyrard M."/>
            <person name="Kedra D."/>
            <person name="Seroussi E."/>
            <person name="Fransson I."/>
            <person name="Tapia I."/>
            <person name="Bruder C.E."/>
            <person name="O'Brien K.P."/>
            <person name="Wilkinson P."/>
            <person name="Bodenteich A."/>
            <person name="Hartman K."/>
            <person name="Hu X."/>
            <person name="Khan A.S."/>
            <person name="Lane L."/>
            <person name="Tilahun Y."/>
            <person name="Wright H."/>
        </authorList>
    </citation>
    <scope>NUCLEOTIDE SEQUENCE [LARGE SCALE GENOMIC DNA]</scope>
</reference>
<reference key="5">
    <citation type="submission" date="2005-07" db="EMBL/GenBank/DDBJ databases">
        <authorList>
            <person name="Mural R.J."/>
            <person name="Istrail S."/>
            <person name="Sutton G.G."/>
            <person name="Florea L."/>
            <person name="Halpern A.L."/>
            <person name="Mobarry C.M."/>
            <person name="Lippert R."/>
            <person name="Walenz B."/>
            <person name="Shatkay H."/>
            <person name="Dew I."/>
            <person name="Miller J.R."/>
            <person name="Flanigan M.J."/>
            <person name="Edwards N.J."/>
            <person name="Bolanos R."/>
            <person name="Fasulo D."/>
            <person name="Halldorsson B.V."/>
            <person name="Hannenhalli S."/>
            <person name="Turner R."/>
            <person name="Yooseph S."/>
            <person name="Lu F."/>
            <person name="Nusskern D.R."/>
            <person name="Shue B.C."/>
            <person name="Zheng X.H."/>
            <person name="Zhong F."/>
            <person name="Delcher A.L."/>
            <person name="Huson D.H."/>
            <person name="Kravitz S.A."/>
            <person name="Mouchard L."/>
            <person name="Reinert K."/>
            <person name="Remington K.A."/>
            <person name="Clark A.G."/>
            <person name="Waterman M.S."/>
            <person name="Eichler E.E."/>
            <person name="Adams M.D."/>
            <person name="Hunkapiller M.W."/>
            <person name="Myers E.W."/>
            <person name="Venter J.C."/>
        </authorList>
    </citation>
    <scope>NUCLEOTIDE SEQUENCE [LARGE SCALE GENOMIC DNA]</scope>
</reference>
<reference key="6">
    <citation type="journal article" date="2006" name="Cell">
        <title>Global, in vivo, and site-specific phosphorylation dynamics in signaling networks.</title>
        <authorList>
            <person name="Olsen J.V."/>
            <person name="Blagoev B."/>
            <person name="Gnad F."/>
            <person name="Macek B."/>
            <person name="Kumar C."/>
            <person name="Mortensen P."/>
            <person name="Mann M."/>
        </authorList>
    </citation>
    <scope>IDENTIFICATION BY MASS SPECTROMETRY [LARGE SCALE ANALYSIS]</scope>
    <source>
        <tissue>Cervix carcinoma</tissue>
    </source>
</reference>
<reference key="7">
    <citation type="journal article" date="2006" name="Mol. Cell">
        <title>ING tumor suppressor proteins are critical regulators of chromatin acetylation required for genome expression and perpetuation.</title>
        <authorList>
            <person name="Doyon Y."/>
            <person name="Cayrou C."/>
            <person name="Ullah M."/>
            <person name="Landry A.-J."/>
            <person name="Cote V."/>
            <person name="Selleck W."/>
            <person name="Lane W.S."/>
            <person name="Tan S."/>
            <person name="Yang X.-J."/>
            <person name="Cote J."/>
        </authorList>
    </citation>
    <scope>FUNCTION</scope>
    <scope>IDENTIFICATION IN THE MOZ/MORF COMPLEX</scope>
</reference>
<reference key="8">
    <citation type="journal article" date="2008" name="Mol. Cell. Biol.">
        <title>Molecular architecture of quartet MOZ/MORF histone acetyltransferase complexes.</title>
        <authorList>
            <person name="Ullah M."/>
            <person name="Pelletier N."/>
            <person name="Xiao L."/>
            <person name="Zhao S.P."/>
            <person name="Wang K."/>
            <person name="Degerny C."/>
            <person name="Tahmasebi S."/>
            <person name="Cayrou C."/>
            <person name="Doyon Y."/>
            <person name="Goh S.-L."/>
            <person name="Champagne N."/>
            <person name="Cote J."/>
            <person name="Yang X.-J."/>
        </authorList>
    </citation>
    <scope>IDENTIFICATION IN THE MOZ/MORF COMPLEX</scope>
</reference>
<reference key="9">
    <citation type="journal article" date="2008" name="Proc. Natl. Acad. Sci. U.S.A.">
        <title>A quantitative atlas of mitotic phosphorylation.</title>
        <authorList>
            <person name="Dephoure N."/>
            <person name="Zhou C."/>
            <person name="Villen J."/>
            <person name="Beausoleil S.A."/>
            <person name="Bakalarski C.E."/>
            <person name="Elledge S.J."/>
            <person name="Gygi S.P."/>
        </authorList>
    </citation>
    <scope>PHOSPHORYLATION [LARGE SCALE ANALYSIS] AT SER-1055</scope>
    <scope>IDENTIFICATION BY MASS SPECTROMETRY [LARGE SCALE ANALYSIS]</scope>
    <source>
        <tissue>Cervix carcinoma</tissue>
    </source>
</reference>
<reference key="10">
    <citation type="journal article" date="2009" name="Sci. Signal.">
        <title>Quantitative phosphoproteomic analysis of T cell receptor signaling reveals system-wide modulation of protein-protein interactions.</title>
        <authorList>
            <person name="Mayya V."/>
            <person name="Lundgren D.H."/>
            <person name="Hwang S.-I."/>
            <person name="Rezaul K."/>
            <person name="Wu L."/>
            <person name="Eng J.K."/>
            <person name="Rodionov V."/>
            <person name="Han D.K."/>
        </authorList>
    </citation>
    <scope>PHOSPHORYLATION [LARGE SCALE ANALYSIS] AT SER-1055</scope>
    <scope>IDENTIFICATION BY MASS SPECTROMETRY [LARGE SCALE ANALYSIS]</scope>
    <source>
        <tissue>Leukemic T-cell</tissue>
    </source>
</reference>
<reference key="11">
    <citation type="journal article" date="2009" name="Science">
        <title>Lysine acetylation targets protein complexes and co-regulates major cellular functions.</title>
        <authorList>
            <person name="Choudhary C."/>
            <person name="Kumar C."/>
            <person name="Gnad F."/>
            <person name="Nielsen M.L."/>
            <person name="Rehman M."/>
            <person name="Walther T.C."/>
            <person name="Olsen J.V."/>
            <person name="Mann M."/>
        </authorList>
    </citation>
    <scope>ACETYLATION [LARGE SCALE ANALYSIS] AT LYS-368; LYS-516; LYS-519 AND LYS-903</scope>
    <scope>IDENTIFICATION BY MASS SPECTROMETRY [LARGE SCALE ANALYSIS]</scope>
</reference>
<reference key="12">
    <citation type="journal article" date="2010" name="Sci. Signal.">
        <title>Quantitative phosphoproteomics reveals widespread full phosphorylation site occupancy during mitosis.</title>
        <authorList>
            <person name="Olsen J.V."/>
            <person name="Vermeulen M."/>
            <person name="Santamaria A."/>
            <person name="Kumar C."/>
            <person name="Miller M.L."/>
            <person name="Jensen L.J."/>
            <person name="Gnad F."/>
            <person name="Cox J."/>
            <person name="Jensen T.S."/>
            <person name="Nigg E.A."/>
            <person name="Brunak S."/>
            <person name="Mann M."/>
        </authorList>
    </citation>
    <scope>PHOSPHORYLATION [LARGE SCALE ANALYSIS] AT SER-1052 AND SER-1055</scope>
    <scope>IDENTIFICATION BY MASS SPECTROMETRY [LARGE SCALE ANALYSIS]</scope>
    <source>
        <tissue>Cervix carcinoma</tissue>
    </source>
</reference>
<reference evidence="20 21" key="13">
    <citation type="journal article" date="2011" name="Blood">
        <title>The Hbo1-Brd1/Brpf2 complex is responsible for global acetylation of H3K14 and required for fetal liver erythropoiesis.</title>
        <authorList>
            <person name="Mishima Y."/>
            <person name="Miyagi S."/>
            <person name="Saraya A."/>
            <person name="Negishi M."/>
            <person name="Endoh M."/>
            <person name="Endo T.A."/>
            <person name="Toyoda T."/>
            <person name="Shinga J."/>
            <person name="Katsumoto T."/>
            <person name="Chiba T."/>
            <person name="Yamaguchi N."/>
            <person name="Kitabayashi I."/>
            <person name="Koseki H."/>
            <person name="Iwama A."/>
        </authorList>
    </citation>
    <scope>FUNCTION</scope>
    <scope>IDENTIFICATION IN THE HBO1 COMPLEX</scope>
    <scope>SUBCELLULAR LOCATION</scope>
</reference>
<reference key="14">
    <citation type="journal article" date="2011" name="Sci. Signal.">
        <title>System-wide temporal characterization of the proteome and phosphoproteome of human embryonic stem cell differentiation.</title>
        <authorList>
            <person name="Rigbolt K.T."/>
            <person name="Prokhorova T.A."/>
            <person name="Akimov V."/>
            <person name="Henningsen J."/>
            <person name="Johansen P.T."/>
            <person name="Kratchmarova I."/>
            <person name="Kassem M."/>
            <person name="Mann M."/>
            <person name="Olsen J.V."/>
            <person name="Blagoev B."/>
        </authorList>
    </citation>
    <scope>PHOSPHORYLATION [LARGE SCALE ANALYSIS] AT SER-128; SER-1052 AND SER-1055</scope>
    <scope>PHOSPHORYLATION [LARGE SCALE ANALYSIS] AT SER-906 (ISOFORM 2)</scope>
    <scope>IDENTIFICATION BY MASS SPECTROMETRY [LARGE SCALE ANALYSIS]</scope>
</reference>
<reference key="15">
    <citation type="journal article" date="2013" name="J. Proteome Res.">
        <title>Toward a comprehensive characterization of a human cancer cell phosphoproteome.</title>
        <authorList>
            <person name="Zhou H."/>
            <person name="Di Palma S."/>
            <person name="Preisinger C."/>
            <person name="Peng M."/>
            <person name="Polat A.N."/>
            <person name="Heck A.J."/>
            <person name="Mohammed S."/>
        </authorList>
    </citation>
    <scope>PHOSPHORYLATION [LARGE SCALE ANALYSIS] AT SER-128 AND SER-803</scope>
    <scope>IDENTIFICATION BY MASS SPECTROMETRY [LARGE SCALE ANALYSIS]</scope>
    <source>
        <tissue>Cervix carcinoma</tissue>
        <tissue>Erythroleukemia</tissue>
    </source>
</reference>
<reference key="16">
    <citation type="journal article" date="2015" name="Genes Dev.">
        <title>Screen identifies bromodomain protein ZMYND8 in chromatin recognition of transcription-associated DNA damage that promotes homologous recombination.</title>
        <authorList>
            <person name="Gong F."/>
            <person name="Chiu L.Y."/>
            <person name="Cox B."/>
            <person name="Aymard F."/>
            <person name="Clouaire T."/>
            <person name="Leung J.W."/>
            <person name="Cammarata M."/>
            <person name="Perez M."/>
            <person name="Agarwal P."/>
            <person name="Brodbelt J.S."/>
            <person name="Legube G."/>
            <person name="Miller K.M."/>
        </authorList>
    </citation>
    <scope>SUBCELLULAR LOCATION</scope>
</reference>
<reference key="17">
    <citation type="journal article" date="2017" name="Nat. Struct. Mol. Biol.">
        <title>Site-specific mapping of the human SUMO proteome reveals co-modification with phosphorylation.</title>
        <authorList>
            <person name="Hendriks I.A."/>
            <person name="Lyon D."/>
            <person name="Young C."/>
            <person name="Jensen L.J."/>
            <person name="Vertegaal A.C."/>
            <person name="Nielsen M.L."/>
        </authorList>
    </citation>
    <scope>SUMOYLATION [LARGE SCALE ANALYSIS] AT LYS-554 AND LYS-594</scope>
    <scope>IDENTIFICATION BY MASS SPECTROMETRY [LARGE SCALE ANALYSIS]</scope>
</reference>
<reference key="18">
    <citation type="journal article" date="2011" name="J. Biol. Chem.">
        <title>Recognition of unmodified histone H3 by the first PHD finger of bromodomain-PHD finger protein 2 provides insights into the regulation of histone acetyltransferases monocytic leukemic zinc-finger protein (MOZ) and MOZ-related factor (MORF).</title>
        <authorList>
            <person name="Qin S."/>
            <person name="Jin L."/>
            <person name="Zhang J."/>
            <person name="Liu L."/>
            <person name="Ji P."/>
            <person name="Wu M."/>
            <person name="Wu J."/>
            <person name="Shi Y."/>
        </authorList>
    </citation>
    <scope>STRUCTURE BY NMR OF 208-269</scope>
    <scope>FUNCTION</scope>
    <scope>SUBCELLULAR LOCATION</scope>
    <scope>INTERACTION WITH UNMODIFIED HISTONE H3</scope>
</reference>
<reference key="19">
    <citation type="journal article" date="2011" name="PLoS ONE">
        <title>Structural and histone binding ability characterizations of human PWWP domains.</title>
        <authorList>
            <person name="Wu H."/>
            <person name="Zeng H."/>
            <person name="Lam R."/>
            <person name="Tempel W."/>
            <person name="Amaya M.F."/>
            <person name="Xu C."/>
            <person name="Dombrovski L."/>
            <person name="Qiu W."/>
            <person name="Wang Y."/>
            <person name="Min J."/>
        </authorList>
    </citation>
    <scope>X-RAY CRYSTALLOGRAPHY (2.1 ANGSTROMS) OF 925-1049</scope>
    <scope>INTERACTION WITH METHYLATED HISTONE H3</scope>
</reference>
<reference key="20">
    <citation type="journal article" date="2012" name="Cell">
        <title>Histone recognition and large-scale structural analysis of the human bromodomain family.</title>
        <authorList>
            <person name="Filippakopoulos P."/>
            <person name="Picaud S."/>
            <person name="Mangos M."/>
            <person name="Keates T."/>
            <person name="Lambert J.P."/>
            <person name="Barsyte-Lovejoy D."/>
            <person name="Felletar I."/>
            <person name="Volkmer R."/>
            <person name="Muller S."/>
            <person name="Pawson T."/>
            <person name="Gingras A.C."/>
            <person name="Arrowsmith C.H."/>
            <person name="Knapp S."/>
        </authorList>
    </citation>
    <scope>X-RAY CRYSTALLOGRAPHY (2.21 ANGSTROMS) OF 556-688</scope>
</reference>
<reference evidence="19" key="21">
    <citation type="journal article" date="2017" name="Nucleic Acids Res.">
        <title>Structural and mechanistic insights into regulation of HBO1 histone acetyltransferase activity by BRPF2.</title>
        <authorList>
            <person name="Tao Y."/>
            <person name="Zhong C."/>
            <person name="Zhu J."/>
            <person name="Xu S."/>
            <person name="Ding J."/>
        </authorList>
    </citation>
    <scope>X-RAY CRYSTALLOGRAPHY (2.40 ANGSTROMS) OF 31-80 IN COMPLEX WITH KAT7</scope>
    <scope>SUBCELLULAR LOCATION</scope>
    <scope>MUTAGENESIS OF 41-GLU--GLU-45; ILE-51; LEU-57; ILE-59 AND 62-GLU--ASP-64</scope>
</reference>
<reference key="22">
    <citation type="journal article" date="2020" name="Nature">
        <title>HBO1 is required for the maintenance of leukaemia stem cells.</title>
        <authorList>
            <person name="MacPherson L."/>
            <person name="Anokye J."/>
            <person name="Yeung M.M."/>
            <person name="Lam E.Y.N."/>
            <person name="Chan Y.C."/>
            <person name="Weng C.F."/>
            <person name="Yeh P."/>
            <person name="Knezevic K."/>
            <person name="Butler M.S."/>
            <person name="Hoegl A."/>
            <person name="Chan K.L."/>
            <person name="Burr M.L."/>
            <person name="Gearing L.J."/>
            <person name="Willson T."/>
            <person name="Liu J."/>
            <person name="Choi J."/>
            <person name="Yang Y."/>
            <person name="Bilardi R.A."/>
            <person name="Falk H."/>
            <person name="Nguyen N."/>
            <person name="Stupple P.A."/>
            <person name="Peat T.S."/>
            <person name="Zhang M."/>
            <person name="de Silva M."/>
            <person name="Carrasco-Pozo C."/>
            <person name="Avery V.M."/>
            <person name="Khoo P.S."/>
            <person name="Dolezal O."/>
            <person name="Dennis M.L."/>
            <person name="Nuttall S."/>
            <person name="Surjadi R."/>
            <person name="Newman J."/>
            <person name="Ren B."/>
            <person name="Leaver D.J."/>
            <person name="Sun Y."/>
            <person name="Baell J.B."/>
            <person name="Dovey O."/>
            <person name="Vassiliou G.S."/>
            <person name="Grebien F."/>
            <person name="Dawson S.J."/>
            <person name="Street I.P."/>
            <person name="Monahan B.J."/>
            <person name="Burns C.J."/>
            <person name="Choudhary C."/>
            <person name="Blewitt M.E."/>
            <person name="Voss A.K."/>
            <person name="Thomas T."/>
            <person name="Dawson M.A."/>
        </authorList>
    </citation>
    <scope>X-RAY CRYSTALLOGRAPHY (2.13 ANGSTROMS) OF 31-80 IN COMPLEX WITH KAT7</scope>
</reference>
<reference key="23">
    <citation type="journal article" date="2017" name="J. Biol. Chem.">
        <title>Mutations in N-acetylglucosamine (O-GlcNAc) transferase in patients with X-linked intellectual disability.</title>
        <authorList>
            <person name="Willems A.P."/>
            <person name="Gundogdu M."/>
            <person name="Kempers M.J.E."/>
            <person name="Giltay J.C."/>
            <person name="Pfundt R."/>
            <person name="Elferink M."/>
            <person name="Loza B.F."/>
            <person name="Fuijkschot J."/>
            <person name="Ferenbach A.T."/>
            <person name="van Gassen K.L.I."/>
            <person name="van Aalten D.M.F."/>
            <person name="Lefeber D.J."/>
        </authorList>
    </citation>
    <scope>VARIANT LEU-230</scope>
</reference>
<evidence type="ECO:0000255" key="1">
    <source>
        <dbReference type="PROSITE-ProRule" id="PRU00035"/>
    </source>
</evidence>
<evidence type="ECO:0000255" key="2">
    <source>
        <dbReference type="PROSITE-ProRule" id="PRU00146"/>
    </source>
</evidence>
<evidence type="ECO:0000255" key="3">
    <source>
        <dbReference type="PROSITE-ProRule" id="PRU00162"/>
    </source>
</evidence>
<evidence type="ECO:0000255" key="4">
    <source>
        <dbReference type="PROSITE-ProRule" id="PRU01146"/>
    </source>
</evidence>
<evidence type="ECO:0000256" key="5">
    <source>
        <dbReference type="SAM" id="MobiDB-lite"/>
    </source>
</evidence>
<evidence type="ECO:0000269" key="6">
    <source>
    </source>
</evidence>
<evidence type="ECO:0000269" key="7">
    <source>
    </source>
</evidence>
<evidence type="ECO:0000269" key="8">
    <source>
    </source>
</evidence>
<evidence type="ECO:0000269" key="9">
    <source>
    </source>
</evidence>
<evidence type="ECO:0000269" key="10">
    <source>
    </source>
</evidence>
<evidence type="ECO:0000269" key="11">
    <source>
    </source>
</evidence>
<evidence type="ECO:0000269" key="12">
    <source>
    </source>
</evidence>
<evidence type="ECO:0000269" key="13">
    <source>
    </source>
</evidence>
<evidence type="ECO:0000269" key="14">
    <source>
    </source>
</evidence>
<evidence type="ECO:0000303" key="15">
    <source>
    </source>
</evidence>
<evidence type="ECO:0000303" key="16">
    <source>
    </source>
</evidence>
<evidence type="ECO:0000303" key="17">
    <source>
    </source>
</evidence>
<evidence type="ECO:0000312" key="18">
    <source>
        <dbReference type="HGNC" id="HGNC:1102"/>
    </source>
</evidence>
<evidence type="ECO:0007744" key="19">
    <source>
        <dbReference type="PDB" id="5GK9"/>
    </source>
</evidence>
<evidence type="ECO:0007744" key="20">
    <source>
        <dbReference type="PDB" id="6MAJ"/>
    </source>
</evidence>
<evidence type="ECO:0007744" key="21">
    <source>
        <dbReference type="PDB" id="6MAK"/>
    </source>
</evidence>
<evidence type="ECO:0007744" key="22">
    <source>
    </source>
</evidence>
<evidence type="ECO:0007744" key="23">
    <source>
    </source>
</evidence>
<evidence type="ECO:0007744" key="24">
    <source>
    </source>
</evidence>
<evidence type="ECO:0007744" key="25">
    <source>
    </source>
</evidence>
<evidence type="ECO:0007744" key="26">
    <source>
    </source>
</evidence>
<evidence type="ECO:0007744" key="27">
    <source>
    </source>
</evidence>
<evidence type="ECO:0007744" key="28">
    <source>
    </source>
</evidence>
<evidence type="ECO:0007829" key="29">
    <source>
        <dbReference type="PDB" id="2KU3"/>
    </source>
</evidence>
<evidence type="ECO:0007829" key="30">
    <source>
        <dbReference type="PDB" id="2L43"/>
    </source>
</evidence>
<evidence type="ECO:0007829" key="31">
    <source>
        <dbReference type="PDB" id="2LQ6"/>
    </source>
</evidence>
<evidence type="ECO:0007829" key="32">
    <source>
        <dbReference type="PDB" id="4Z02"/>
    </source>
</evidence>
<evidence type="ECO:0007829" key="33">
    <source>
        <dbReference type="PDB" id="5FG6"/>
    </source>
</evidence>
<evidence type="ECO:0007829" key="34">
    <source>
        <dbReference type="PDB" id="5PS1"/>
    </source>
</evidence>
<evidence type="ECO:0007829" key="35">
    <source>
        <dbReference type="PDB" id="7D0P"/>
    </source>
</evidence>
<evidence type="ECO:0007829" key="36">
    <source>
        <dbReference type="PDB" id="7LH9"/>
    </source>
</evidence>
<feature type="chain" id="PRO_0000211177" description="Bromodomain-containing protein 1">
    <location>
        <begin position="1"/>
        <end position="1058"/>
    </location>
</feature>
<feature type="domain" description="Bromo" evidence="1">
    <location>
        <begin position="562"/>
        <end position="666"/>
    </location>
</feature>
<feature type="domain" description="PWWP" evidence="3">
    <location>
        <begin position="929"/>
        <end position="1012"/>
    </location>
</feature>
<feature type="zinc finger region" description="PHD-type 1" evidence="2">
    <location>
        <begin position="214"/>
        <end position="264"/>
    </location>
</feature>
<feature type="zinc finger region" description="C2HC pre-PHD-type" evidence="4">
    <location>
        <begin position="268"/>
        <end position="301"/>
    </location>
</feature>
<feature type="zinc finger region" description="PHD-type 2" evidence="4">
    <location>
        <begin position="325"/>
        <end position="389"/>
    </location>
</feature>
<feature type="region of interest" description="Disordered" evidence="5">
    <location>
        <begin position="1"/>
        <end position="26"/>
    </location>
</feature>
<feature type="region of interest" description="Interaction with KAT7/HBO1 and histones" evidence="13">
    <location>
        <begin position="31"/>
        <end position="80"/>
    </location>
</feature>
<feature type="region of interest" description="Disordered" evidence="5">
    <location>
        <begin position="92"/>
        <end position="116"/>
    </location>
</feature>
<feature type="region of interest" description="Disordered" evidence="5">
    <location>
        <begin position="755"/>
        <end position="776"/>
    </location>
</feature>
<feature type="region of interest" description="Disordered" evidence="5">
    <location>
        <begin position="791"/>
        <end position="868"/>
    </location>
</feature>
<feature type="compositionally biased region" description="Basic residues" evidence="5">
    <location>
        <begin position="1"/>
        <end position="12"/>
    </location>
</feature>
<feature type="compositionally biased region" description="Low complexity" evidence="5">
    <location>
        <begin position="852"/>
        <end position="867"/>
    </location>
</feature>
<feature type="modified residue" description="Phosphoserine" evidence="26 27">
    <location>
        <position position="128"/>
    </location>
</feature>
<feature type="modified residue" description="N6-acetyllysine" evidence="23">
    <location>
        <position position="368"/>
    </location>
</feature>
<feature type="modified residue" description="N6-acetyllysine" evidence="23">
    <location>
        <position position="516"/>
    </location>
</feature>
<feature type="modified residue" description="N6-acetyllysine" evidence="23">
    <location>
        <position position="519"/>
    </location>
</feature>
<feature type="modified residue" description="Phosphoserine" evidence="27">
    <location>
        <position position="803"/>
    </location>
</feature>
<feature type="modified residue" description="N6-acetyllysine" evidence="23">
    <location>
        <position position="903"/>
    </location>
</feature>
<feature type="modified residue" description="Phosphoserine" evidence="25 26">
    <location>
        <position position="1052"/>
    </location>
</feature>
<feature type="modified residue" description="Phosphoserine" evidence="22 24 25 26">
    <location>
        <position position="1055"/>
    </location>
</feature>
<feature type="cross-link" description="Glycyl lysine isopeptide (Lys-Gly) (interchain with G-Cter in SUMO2)" evidence="28">
    <location>
        <position position="554"/>
    </location>
</feature>
<feature type="cross-link" description="Glycyl lysine isopeptide (Lys-Gly) (interchain with G-Cter in SUMO2)" evidence="28">
    <location>
        <position position="594"/>
    </location>
</feature>
<feature type="splice variant" id="VSP_040262" description="In isoform 2." evidence="16">
    <original>E</original>
    <variation>EGDKSPPKLEPSDALPLPSNSETNSEPPTLKPVELNPEQSKLFKRVTFDNESHSACTQSALVSGRPPEPTRASSGDVPAAAASAVAEPASDVNRRTSVLFCKSKSVSPPKSAKNTETQPTSPQLGTKTFLSV</variation>
    <location>
        <position position="786"/>
    </location>
</feature>
<feature type="sequence variant" id="VAR_048424" description="In dbSNP:rs11549978.">
    <original>R</original>
    <variation>G</variation>
    <location>
        <position position="38"/>
    </location>
</feature>
<feature type="sequence variant" id="VAR_079184" evidence="14">
    <original>V</original>
    <variation>L</variation>
    <location>
        <position position="230"/>
    </location>
</feature>
<feature type="sequence variant" id="VAR_048425" description="In dbSNP:rs12157714.">
    <original>A</original>
    <variation>S</variation>
    <location>
        <position position="321"/>
    </location>
</feature>
<feature type="sequence variant" id="VAR_048426" description="In dbSNP:rs35331092.">
    <original>A</original>
    <variation>T</variation>
    <location>
        <position position="730"/>
    </location>
</feature>
<feature type="mutagenesis site" description="Decreased interaction with free histones." evidence="13">
    <original>EIEIE</original>
    <variation>AIAIA</variation>
    <variation>KIKIK</variation>
    <location>
        <begin position="41"/>
        <end position="45"/>
    </location>
</feature>
<feature type="mutagenesis site" description="Impaired interaction with KAT7/HBO1." evidence="13">
    <original>I</original>
    <variation>A</variation>
    <variation>K</variation>
    <location>
        <position position="51"/>
    </location>
</feature>
<feature type="mutagenesis site" description="Impaired interaction with KAT7/HBO1." evidence="13">
    <original>L</original>
    <variation>A</variation>
    <variation>K</variation>
    <location>
        <position position="57"/>
    </location>
</feature>
<feature type="mutagenesis site" description="Impaired interaction with KAT7/HBO1." evidence="13">
    <original>I</original>
    <variation>A</variation>
    <variation>K</variation>
    <location>
        <position position="59"/>
    </location>
</feature>
<feature type="mutagenesis site" description="Decreased interaction with free histones." evidence="13">
    <original>EDD</original>
    <variation>AAA</variation>
    <variation>KKK</variation>
    <location>
        <begin position="62"/>
        <end position="64"/>
    </location>
</feature>
<feature type="strand" evidence="35">
    <location>
        <begin position="39"/>
        <end position="44"/>
    </location>
</feature>
<feature type="strand" evidence="35">
    <location>
        <begin position="47"/>
        <end position="55"/>
    </location>
</feature>
<feature type="strand" evidence="35">
    <location>
        <begin position="57"/>
        <end position="62"/>
    </location>
</feature>
<feature type="turn" evidence="30">
    <location>
        <begin position="205"/>
        <end position="208"/>
    </location>
</feature>
<feature type="strand" evidence="29">
    <location>
        <begin position="218"/>
        <end position="220"/>
    </location>
</feature>
<feature type="strand" evidence="30">
    <location>
        <begin position="222"/>
        <end position="225"/>
    </location>
</feature>
<feature type="strand" evidence="29">
    <location>
        <begin position="227"/>
        <end position="229"/>
    </location>
</feature>
<feature type="strand" evidence="29">
    <location>
        <begin position="231"/>
        <end position="233"/>
    </location>
</feature>
<feature type="strand" evidence="29">
    <location>
        <begin position="235"/>
        <end position="237"/>
    </location>
</feature>
<feature type="strand" evidence="29">
    <location>
        <begin position="240"/>
        <end position="242"/>
    </location>
</feature>
<feature type="helix" evidence="29">
    <location>
        <begin position="243"/>
        <end position="246"/>
    </location>
</feature>
<feature type="helix" evidence="29">
    <location>
        <begin position="259"/>
        <end position="266"/>
    </location>
</feature>
<feature type="turn" evidence="31">
    <location>
        <begin position="328"/>
        <end position="331"/>
    </location>
</feature>
<feature type="strand" evidence="31">
    <location>
        <begin position="338"/>
        <end position="340"/>
    </location>
</feature>
<feature type="turn" evidence="31">
    <location>
        <begin position="344"/>
        <end position="346"/>
    </location>
</feature>
<feature type="strand" evidence="31">
    <location>
        <begin position="349"/>
        <end position="351"/>
    </location>
</feature>
<feature type="helix" evidence="31">
    <location>
        <begin position="352"/>
        <end position="358"/>
    </location>
</feature>
<feature type="strand" evidence="31">
    <location>
        <begin position="362"/>
        <end position="369"/>
    </location>
</feature>
<feature type="turn" evidence="31">
    <location>
        <begin position="371"/>
        <end position="373"/>
    </location>
</feature>
<feature type="strand" evidence="31">
    <location>
        <begin position="376"/>
        <end position="383"/>
    </location>
</feature>
<feature type="helix" evidence="31">
    <location>
        <begin position="386"/>
        <end position="388"/>
    </location>
</feature>
<feature type="strand" evidence="31">
    <location>
        <begin position="389"/>
        <end position="392"/>
    </location>
</feature>
<feature type="helix" evidence="33">
    <location>
        <begin position="566"/>
        <end position="579"/>
    </location>
</feature>
<feature type="strand" evidence="34">
    <location>
        <begin position="586"/>
        <end position="589"/>
    </location>
</feature>
<feature type="turn" evidence="33">
    <location>
        <begin position="593"/>
        <end position="595"/>
    </location>
</feature>
<feature type="helix" evidence="33">
    <location>
        <begin position="599"/>
        <end position="602"/>
    </location>
</feature>
<feature type="helix" evidence="33">
    <location>
        <begin position="609"/>
        <end position="617"/>
    </location>
</feature>
<feature type="helix" evidence="33">
    <location>
        <begin position="624"/>
        <end position="641"/>
    </location>
</feature>
<feature type="strand" evidence="33">
    <location>
        <begin position="644"/>
        <end position="646"/>
    </location>
</feature>
<feature type="helix" evidence="33">
    <location>
        <begin position="647"/>
        <end position="673"/>
    </location>
</feature>
<feature type="helix" evidence="33">
    <location>
        <begin position="675"/>
        <end position="679"/>
    </location>
</feature>
<feature type="strand" evidence="32">
    <location>
        <begin position="932"/>
        <end position="935"/>
    </location>
</feature>
<feature type="strand" evidence="32">
    <location>
        <begin position="943"/>
        <end position="948"/>
    </location>
</feature>
<feature type="strand" evidence="36">
    <location>
        <begin position="957"/>
        <end position="959"/>
    </location>
</feature>
<feature type="helix" evidence="32">
    <location>
        <begin position="969"/>
        <end position="979"/>
    </location>
</feature>
<feature type="strand" evidence="32">
    <location>
        <begin position="986"/>
        <end position="991"/>
    </location>
</feature>
<feature type="strand" evidence="32">
    <location>
        <begin position="998"/>
        <end position="1002"/>
    </location>
</feature>
<feature type="helix" evidence="32">
    <location>
        <begin position="1003"/>
        <end position="1005"/>
    </location>
</feature>
<feature type="strand" evidence="32">
    <location>
        <begin position="1006"/>
        <end position="1011"/>
    </location>
</feature>
<feature type="helix" evidence="32">
    <location>
        <begin position="1013"/>
        <end position="1020"/>
    </location>
</feature>
<feature type="strand" evidence="32">
    <location>
        <begin position="1023"/>
        <end position="1025"/>
    </location>
</feature>
<feature type="helix" evidence="32">
    <location>
        <begin position="1026"/>
        <end position="1046"/>
    </location>
</feature>
<feature type="modified residue" description="Phosphoserine" evidence="26">
    <location sequence="O95696-2">
        <position position="906"/>
    </location>
</feature>
<gene>
    <name evidence="17 18" type="primary">BRD1</name>
    <name evidence="15" type="synonym">BRL</name>
    <name evidence="17" type="synonym">BRPF2</name>
</gene>
<protein>
    <recommendedName>
        <fullName evidence="17">Bromodomain-containing protein 1</fullName>
    </recommendedName>
    <alternativeName>
        <fullName evidence="15">BR140-like protein</fullName>
    </alternativeName>
    <alternativeName>
        <fullName evidence="17">Bromodomain and PHD finger-containing protein 2</fullName>
    </alternativeName>
</protein>
<accession>O95696</accession>
<accession>A6ZJA4</accession>
<comment type="function">
    <text evidence="7 10 11">Scaffold subunit of various histone acetyltransferase (HAT) complexes, such as the MOZ/MORF and HBO1 complexes, that acts as a regulator of hematopoiesis (PubMed:16387653, PubMed:21753189, PubMed:21880731). Plays a key role in HBO1 complex by directing KAT7/HBO1 specificity towards histone H3 'Lys-14' acetylation (H3K14ac), thereby promoting erythroid differentiation (PubMed:21753189).</text>
</comment>
<comment type="subunit">
    <text evidence="7 8 9 10 11 13">Component of some HBO1 complex composed of KAT7/HBO1, MEAF6, ING4 and BRD1/BRPF2 (PubMed:21753189, PubMed:28334966). Component of the MOZ/MORF complex composed at least of ING5, KAT6A, KAT6B, MEAF6 and one of BRPF1, BRD1/BRPF2 and BRPF3 (PubMed:16387653, PubMed:18794358). Interacts (via PHD-type zinc finger domain) with unmodified histone H3 (PubMed:21880731). Interacts (via PWWP domain) with dimethylated and trimethylated 'Lys-79' on histone H3 (PubMed:21720545).</text>
</comment>
<comment type="interaction">
    <interactant intactId="EBI-714754">
        <id>O95696</id>
    </interactant>
    <interactant intactId="EBI-12861768">
        <id>Q6NVI2</id>
        <label>CASP8</label>
    </interactant>
    <organismsDiffer>false</organismsDiffer>
    <experiments>3</experiments>
</comment>
<comment type="interaction">
    <interactant intactId="EBI-714754">
        <id>O95696</id>
    </interactant>
    <interactant intactId="EBI-739624">
        <id>Q8NHQ1</id>
        <label>CEP70</label>
    </interactant>
    <organismsDiffer>false</organismsDiffer>
    <experiments>3</experiments>
</comment>
<comment type="interaction">
    <interactant intactId="EBI-714754">
        <id>O95696</id>
    </interactant>
    <interactant intactId="EBI-11988027">
        <id>Q9NRI5-2</id>
        <label>DISC1</label>
    </interactant>
    <organismsDiffer>false</organismsDiffer>
    <experiments>3</experiments>
</comment>
<comment type="interaction">
    <interactant intactId="EBI-714754">
        <id>O95696</id>
    </interactant>
    <interactant intactId="EBI-2549423">
        <id>Q6NT76</id>
        <label>HMBOX1</label>
    </interactant>
    <organismsDiffer>false</organismsDiffer>
    <experiments>3</experiments>
</comment>
<comment type="interaction">
    <interactant intactId="EBI-714754">
        <id>O95696</id>
    </interactant>
    <interactant intactId="EBI-739552">
        <id>P43364</id>
        <label>MAGEA11</label>
    </interactant>
    <organismsDiffer>false</organismsDiffer>
    <experiments>3</experiments>
</comment>
<comment type="interaction">
    <interactant intactId="EBI-714754">
        <id>O95696</id>
    </interactant>
    <interactant intactId="EBI-307531">
        <id>P23508</id>
        <label>MCC</label>
    </interactant>
    <organismsDiffer>false</organismsDiffer>
    <experiments>4</experiments>
</comment>
<comment type="interaction">
    <interactant intactId="EBI-714754">
        <id>O95696</id>
    </interactant>
    <interactant intactId="EBI-79165">
        <id>Q9NRD5</id>
        <label>PICK1</label>
    </interactant>
    <organismsDiffer>false</organismsDiffer>
    <experiments>3</experiments>
</comment>
<comment type="interaction">
    <interactant intactId="EBI-714754">
        <id>O95696</id>
    </interactant>
    <interactant intactId="EBI-2952709">
        <id>Q92622</id>
        <label>RUBCN</label>
    </interactant>
    <organismsDiffer>false</organismsDiffer>
    <experiments>3</experiments>
</comment>
<comment type="interaction">
    <interactant intactId="EBI-714754">
        <id>O95696</id>
    </interactant>
    <interactant intactId="EBI-1105213">
        <id>Q9UBB9</id>
        <label>TFIP11</label>
    </interactant>
    <organismsDiffer>false</organismsDiffer>
    <experiments>3</experiments>
</comment>
<comment type="interaction">
    <interactant intactId="EBI-714754">
        <id>O95696</id>
    </interactant>
    <interactant intactId="EBI-527853">
        <id>Q9UGI0</id>
        <label>ZRANB1</label>
    </interactant>
    <organismsDiffer>false</organismsDiffer>
    <experiments>3</experiments>
</comment>
<comment type="interaction">
    <interactant intactId="EBI-11700916">
        <id>O95696-1</id>
    </interactant>
    <interactant intactId="EBI-637807">
        <id>Q86U86</id>
        <label>PBRM1</label>
    </interactant>
    <organismsDiffer>false</organismsDiffer>
    <experiments>2</experiments>
</comment>
<comment type="interaction">
    <interactant intactId="EBI-11017508">
        <id>O95696-2</id>
    </interactant>
    <interactant intactId="EBI-637807">
        <id>Q86U86</id>
        <label>PBRM1</label>
    </interactant>
    <organismsDiffer>false</organismsDiffer>
    <experiments>2</experiments>
</comment>
<comment type="subcellular location">
    <subcellularLocation>
        <location evidence="10 11 12">Nucleus</location>
    </subcellularLocation>
    <subcellularLocation>
        <location evidence="10 13">Chromosome</location>
    </subcellularLocation>
    <text evidence="10 13">Localizes to transcription start sites.</text>
</comment>
<comment type="alternative products">
    <event type="alternative splicing"/>
    <isoform>
        <id>O95696-1</id>
        <name>1</name>
        <sequence type="displayed"/>
    </isoform>
    <isoform>
        <id>O95696-2</id>
        <name>2</name>
        <sequence type="described" ref="VSP_040262"/>
    </isoform>
</comment>
<comment type="tissue specificity">
    <text evidence="6">Highly expressed in testis.</text>
</comment>
<proteinExistence type="evidence at protein level"/>
<sequence>MRRKGRCHRGSAARHPSSPCSVKHSPTRETLTYAQAQRMVEIEIEGRLHRISIFDPLEIILEDDLTAQEMSECNSNKENSERPPVCLRTKRHKNNRVKKKNEALPSAHGTPASASALPEPKVRIVEYSPPSAPRRPPVYYKFIEKSAEELDNEVEYDMDEEDYAWLEIVNEKRKGDCVPAVSQSMFEFLMDRFEKESHCENQKQGEQQSLIDEDAVCCICMDGECQNSNVILFCDMCNLAVHQECYGVPYIPEGQWLCRHCLQSRARPADCVLCPNKGGAFKKTDDDRWGHVVCALWIPEVGFANTVFIEPIDGVRNIPPARWKLTCYLCKQKGVGACIQCHKANCYTAFHVTCAQKAGLYMKMEPVKELTGGGTTFSVRKTAYCDVHTPPGCTRRPLNIYGDVEMKNGVCRKESSVKTVRSTSKVRKKAKKAKKALAEPCAVLPTVCAPYIPPQRLNRIANQVAIQRKKQFVERAHSYWLLKRLSRNGAPLLRRLQSSLQSQRSSQQRENDEEMKAAKEKLKYWQRLRHDLERARLLIELLRKREKLKREQVKVEQVAMELRLTPLTVLLRSVLDQLQDKDPARIFAQPVSLKEVPDYLDHIKHPMDFATMRKRLEAQGYKNLHEFEEDFDLIIDNCMKYNARDTVFYRAAVRLRDQGGVVLRQARREVDSIGLEEASGMHLPERPAAAPRRPFSWEDVDRLLDPANRAHLGLEEQLRELLDMLDLTCAMKSSGSRSKRAKLLKKEIALLRNKLSQQHSQPLPTGPGLEGFEEDGAALGPEAGEEVLPRLETLLQPRKRSRSTCGDSEVEEESPGKRLDAGLTNGFGGARSEQEPGGGLGRKATPRRRCASESSISSSNSPLCDSSFNAPKCGRGKPALVRRHTLEDRSELISCIENGNYAKAARIAAEVGQSSMWISTDAAASVLEPLKVVWAKCSGYPSYPALIIDPKMPRVPGHHNGVTIPAPPLDVLKIGEHMQTKSDEKLFLVLFFDNKRSWQWLPKSKMVPLGIDETIDKLKMMEGRNSSIRKAVRIAFDRAMNHLSRVHGEPTSDLSDID</sequence>
<dbReference type="EMBL" id="AF005067">
    <property type="protein sequence ID" value="AAF34320.1"/>
    <property type="molecule type" value="mRNA"/>
</dbReference>
<dbReference type="EMBL" id="CR456408">
    <property type="protein sequence ID" value="CAG30294.1"/>
    <property type="molecule type" value="mRNA"/>
</dbReference>
<dbReference type="EMBL" id="AK292428">
    <property type="protein sequence ID" value="BAF85117.1"/>
    <property type="molecule type" value="mRNA"/>
</dbReference>
<dbReference type="EMBL" id="Z98885">
    <property type="status" value="NOT_ANNOTATED_CDS"/>
    <property type="molecule type" value="Genomic_DNA"/>
</dbReference>
<dbReference type="EMBL" id="CH471138">
    <property type="protein sequence ID" value="EAW73473.1"/>
    <property type="molecule type" value="Genomic_DNA"/>
</dbReference>
<dbReference type="CCDS" id="CCDS14080.1">
    <molecule id="O95696-1"/>
</dbReference>
<dbReference type="CCDS" id="CCDS77686.1">
    <molecule id="O95696-2"/>
</dbReference>
<dbReference type="RefSeq" id="NP_001291737.1">
    <molecule id="O95696-2"/>
    <property type="nucleotide sequence ID" value="NM_001304808.3"/>
</dbReference>
<dbReference type="RefSeq" id="NP_001291738.1">
    <molecule id="O95696-1"/>
    <property type="nucleotide sequence ID" value="NM_001304809.1"/>
</dbReference>
<dbReference type="RefSeq" id="NP_001381480.1">
    <molecule id="O95696-1"/>
    <property type="nucleotide sequence ID" value="NM_001394551.1"/>
</dbReference>
<dbReference type="RefSeq" id="NP_001381481.1">
    <molecule id="O95696-1"/>
    <property type="nucleotide sequence ID" value="NM_001394552.1"/>
</dbReference>
<dbReference type="RefSeq" id="XP_016884204.1">
    <property type="nucleotide sequence ID" value="XM_017028715.1"/>
</dbReference>
<dbReference type="RefSeq" id="XP_016884205.1">
    <molecule id="O95696-2"/>
    <property type="nucleotide sequence ID" value="XM_017028716.2"/>
</dbReference>
<dbReference type="RefSeq" id="XP_016884206.1">
    <property type="nucleotide sequence ID" value="XM_017028717.1"/>
</dbReference>
<dbReference type="RefSeq" id="XP_047297230.1">
    <molecule id="O95696-2"/>
    <property type="nucleotide sequence ID" value="XM_047441274.1"/>
</dbReference>
<dbReference type="RefSeq" id="XP_054181395.1">
    <molecule id="O95696-2"/>
    <property type="nucleotide sequence ID" value="XM_054325420.1"/>
</dbReference>
<dbReference type="RefSeq" id="XP_054181396.1">
    <molecule id="O95696-2"/>
    <property type="nucleotide sequence ID" value="XM_054325421.1"/>
</dbReference>
<dbReference type="PDB" id="2KU3">
    <property type="method" value="NMR"/>
    <property type="chains" value="A=208-269"/>
</dbReference>
<dbReference type="PDB" id="2L43">
    <property type="method" value="NMR"/>
    <property type="chains" value="A=205-269"/>
</dbReference>
<dbReference type="PDB" id="2LQ6">
    <property type="method" value="NMR"/>
    <property type="chains" value="A=317-392"/>
</dbReference>
<dbReference type="PDB" id="3LYI">
    <property type="method" value="X-ray"/>
    <property type="resolution" value="2.10 A"/>
    <property type="chains" value="A/B=925-1049"/>
</dbReference>
<dbReference type="PDB" id="3RCW">
    <property type="method" value="X-ray"/>
    <property type="resolution" value="2.21 A"/>
    <property type="chains" value="A/B/C/D/E/F/G/H=556-688"/>
</dbReference>
<dbReference type="PDB" id="4Z02">
    <property type="method" value="X-ray"/>
    <property type="resolution" value="1.87 A"/>
    <property type="chains" value="A/B=925-1049"/>
</dbReference>
<dbReference type="PDB" id="5AME">
    <property type="method" value="X-ray"/>
    <property type="resolution" value="1.58 A"/>
    <property type="chains" value="A/B=556-688"/>
</dbReference>
<dbReference type="PDB" id="5AMF">
    <property type="method" value="X-ray"/>
    <property type="resolution" value="1.75 A"/>
    <property type="chains" value="A/B=556-688"/>
</dbReference>
<dbReference type="PDB" id="5FG6">
    <property type="method" value="X-ray"/>
    <property type="resolution" value="1.10 A"/>
    <property type="chains" value="A=563-688"/>
</dbReference>
<dbReference type="PDB" id="5GK9">
    <property type="method" value="X-ray"/>
    <property type="resolution" value="2.40 A"/>
    <property type="chains" value="B=31-80"/>
</dbReference>
<dbReference type="PDB" id="5N49">
    <property type="method" value="X-ray"/>
    <property type="resolution" value="1.94 A"/>
    <property type="chains" value="A/B=555-688"/>
</dbReference>
<dbReference type="PDB" id="5PNX">
    <property type="method" value="X-ray"/>
    <property type="resolution" value="1.47 A"/>
    <property type="chains" value="A/B=555-688"/>
</dbReference>
<dbReference type="PDB" id="5PNY">
    <property type="method" value="X-ray"/>
    <property type="resolution" value="1.48 A"/>
    <property type="chains" value="A/B=555-688"/>
</dbReference>
<dbReference type="PDB" id="5PNZ">
    <property type="method" value="X-ray"/>
    <property type="resolution" value="1.56 A"/>
    <property type="chains" value="A/B=555-688"/>
</dbReference>
<dbReference type="PDB" id="5PO0">
    <property type="method" value="X-ray"/>
    <property type="resolution" value="1.46 A"/>
    <property type="chains" value="A/B=555-688"/>
</dbReference>
<dbReference type="PDB" id="5PO1">
    <property type="method" value="X-ray"/>
    <property type="resolution" value="1.52 A"/>
    <property type="chains" value="A/B=555-688"/>
</dbReference>
<dbReference type="PDB" id="5PO2">
    <property type="method" value="X-ray"/>
    <property type="resolution" value="1.67 A"/>
    <property type="chains" value="A/B=555-688"/>
</dbReference>
<dbReference type="PDB" id="5PO3">
    <property type="method" value="X-ray"/>
    <property type="resolution" value="1.70 A"/>
    <property type="chains" value="A/B=555-688"/>
</dbReference>
<dbReference type="PDB" id="5PO4">
    <property type="method" value="X-ray"/>
    <property type="resolution" value="1.49 A"/>
    <property type="chains" value="A/B=555-688"/>
</dbReference>
<dbReference type="PDB" id="5PO5">
    <property type="method" value="X-ray"/>
    <property type="resolution" value="1.44 A"/>
    <property type="chains" value="A/B=555-688"/>
</dbReference>
<dbReference type="PDB" id="5PO6">
    <property type="method" value="X-ray"/>
    <property type="resolution" value="1.61 A"/>
    <property type="chains" value="A/B=555-688"/>
</dbReference>
<dbReference type="PDB" id="5PO7">
    <property type="method" value="X-ray"/>
    <property type="resolution" value="1.50 A"/>
    <property type="chains" value="A/B=555-688"/>
</dbReference>
<dbReference type="PDB" id="5PO8">
    <property type="method" value="X-ray"/>
    <property type="resolution" value="1.50 A"/>
    <property type="chains" value="A/B=555-688"/>
</dbReference>
<dbReference type="PDB" id="5PO9">
    <property type="method" value="X-ray"/>
    <property type="resolution" value="2.12 A"/>
    <property type="chains" value="A/B=555-688"/>
</dbReference>
<dbReference type="PDB" id="5POA">
    <property type="method" value="X-ray"/>
    <property type="resolution" value="1.62 A"/>
    <property type="chains" value="A/B=555-688"/>
</dbReference>
<dbReference type="PDB" id="5POB">
    <property type="method" value="X-ray"/>
    <property type="resolution" value="1.78 A"/>
    <property type="chains" value="A/B=555-688"/>
</dbReference>
<dbReference type="PDB" id="5POC">
    <property type="method" value="X-ray"/>
    <property type="resolution" value="1.48 A"/>
    <property type="chains" value="A/B=555-688"/>
</dbReference>
<dbReference type="PDB" id="5POD">
    <property type="method" value="X-ray"/>
    <property type="resolution" value="1.56 A"/>
    <property type="chains" value="A/B=555-688"/>
</dbReference>
<dbReference type="PDB" id="5POE">
    <property type="method" value="X-ray"/>
    <property type="resolution" value="1.52 A"/>
    <property type="chains" value="A/B=555-688"/>
</dbReference>
<dbReference type="PDB" id="5POF">
    <property type="method" value="X-ray"/>
    <property type="resolution" value="2.27 A"/>
    <property type="chains" value="A/B=555-688"/>
</dbReference>
<dbReference type="PDB" id="5POG">
    <property type="method" value="X-ray"/>
    <property type="resolution" value="1.77 A"/>
    <property type="chains" value="A/B=555-688"/>
</dbReference>
<dbReference type="PDB" id="5POH">
    <property type="method" value="X-ray"/>
    <property type="resolution" value="1.61 A"/>
    <property type="chains" value="A/B=555-688"/>
</dbReference>
<dbReference type="PDB" id="5POI">
    <property type="method" value="X-ray"/>
    <property type="resolution" value="2.37 A"/>
    <property type="chains" value="A/B=555-688"/>
</dbReference>
<dbReference type="PDB" id="5POJ">
    <property type="method" value="X-ray"/>
    <property type="resolution" value="1.62 A"/>
    <property type="chains" value="A/B=555-688"/>
</dbReference>
<dbReference type="PDB" id="5POK">
    <property type="method" value="X-ray"/>
    <property type="resolution" value="1.56 A"/>
    <property type="chains" value="A/B=555-688"/>
</dbReference>
<dbReference type="PDB" id="5POL">
    <property type="method" value="X-ray"/>
    <property type="resolution" value="1.62 A"/>
    <property type="chains" value="A/B=555-688"/>
</dbReference>
<dbReference type="PDB" id="5POM">
    <property type="method" value="X-ray"/>
    <property type="resolution" value="1.54 A"/>
    <property type="chains" value="A/B=555-688"/>
</dbReference>
<dbReference type="PDB" id="5PON">
    <property type="method" value="X-ray"/>
    <property type="resolution" value="1.52 A"/>
    <property type="chains" value="A/B=555-688"/>
</dbReference>
<dbReference type="PDB" id="5POO">
    <property type="method" value="X-ray"/>
    <property type="resolution" value="1.50 A"/>
    <property type="chains" value="A/B=555-688"/>
</dbReference>
<dbReference type="PDB" id="5POP">
    <property type="method" value="X-ray"/>
    <property type="resolution" value="1.58 A"/>
    <property type="chains" value="A/B=555-688"/>
</dbReference>
<dbReference type="PDB" id="5POQ">
    <property type="method" value="X-ray"/>
    <property type="resolution" value="1.97 A"/>
    <property type="chains" value="A/B=555-688"/>
</dbReference>
<dbReference type="PDB" id="5POR">
    <property type="method" value="X-ray"/>
    <property type="resolution" value="1.58 A"/>
    <property type="chains" value="A/B=555-688"/>
</dbReference>
<dbReference type="PDB" id="5POS">
    <property type="method" value="X-ray"/>
    <property type="resolution" value="1.75 A"/>
    <property type="chains" value="A/B=555-688"/>
</dbReference>
<dbReference type="PDB" id="5POT">
    <property type="method" value="X-ray"/>
    <property type="resolution" value="1.63 A"/>
    <property type="chains" value="A/B=555-688"/>
</dbReference>
<dbReference type="PDB" id="5POU">
    <property type="method" value="X-ray"/>
    <property type="resolution" value="1.43 A"/>
    <property type="chains" value="A/B=555-688"/>
</dbReference>
<dbReference type="PDB" id="5POV">
    <property type="method" value="X-ray"/>
    <property type="resolution" value="1.57 A"/>
    <property type="chains" value="A/B=555-688"/>
</dbReference>
<dbReference type="PDB" id="5POW">
    <property type="method" value="X-ray"/>
    <property type="resolution" value="1.77 A"/>
    <property type="chains" value="A/B=555-688"/>
</dbReference>
<dbReference type="PDB" id="5POX">
    <property type="method" value="X-ray"/>
    <property type="resolution" value="1.75 A"/>
    <property type="chains" value="A/B=555-688"/>
</dbReference>
<dbReference type="PDB" id="5POY">
    <property type="method" value="X-ray"/>
    <property type="resolution" value="1.76 A"/>
    <property type="chains" value="A/B=555-688"/>
</dbReference>
<dbReference type="PDB" id="5POZ">
    <property type="method" value="X-ray"/>
    <property type="resolution" value="1.50 A"/>
    <property type="chains" value="A/B=555-688"/>
</dbReference>
<dbReference type="PDB" id="5PP0">
    <property type="method" value="X-ray"/>
    <property type="resolution" value="1.61 A"/>
    <property type="chains" value="A/B=555-688"/>
</dbReference>
<dbReference type="PDB" id="5PP1">
    <property type="method" value="X-ray"/>
    <property type="resolution" value="2.35 A"/>
    <property type="chains" value="A/B=555-688"/>
</dbReference>
<dbReference type="PDB" id="5PP2">
    <property type="method" value="X-ray"/>
    <property type="resolution" value="1.61 A"/>
    <property type="chains" value="A/B=555-688"/>
</dbReference>
<dbReference type="PDB" id="5PP3">
    <property type="method" value="X-ray"/>
    <property type="resolution" value="2.58 A"/>
    <property type="chains" value="A/B=555-688"/>
</dbReference>
<dbReference type="PDB" id="5PP4">
    <property type="method" value="X-ray"/>
    <property type="resolution" value="1.92 A"/>
    <property type="chains" value="A/B=555-688"/>
</dbReference>
<dbReference type="PDB" id="5PP5">
    <property type="method" value="X-ray"/>
    <property type="resolution" value="1.87 A"/>
    <property type="chains" value="A/B=555-688"/>
</dbReference>
<dbReference type="PDB" id="5PP6">
    <property type="method" value="X-ray"/>
    <property type="resolution" value="1.52 A"/>
    <property type="chains" value="A/B=555-688"/>
</dbReference>
<dbReference type="PDB" id="5PP7">
    <property type="method" value="X-ray"/>
    <property type="resolution" value="1.52 A"/>
    <property type="chains" value="A/B=555-688"/>
</dbReference>
<dbReference type="PDB" id="5PP8">
    <property type="method" value="X-ray"/>
    <property type="resolution" value="1.74 A"/>
    <property type="chains" value="A/B=555-688"/>
</dbReference>
<dbReference type="PDB" id="5PP9">
    <property type="method" value="X-ray"/>
    <property type="resolution" value="1.82 A"/>
    <property type="chains" value="A/B=555-688"/>
</dbReference>
<dbReference type="PDB" id="5PPA">
    <property type="method" value="X-ray"/>
    <property type="resolution" value="1.91 A"/>
    <property type="chains" value="A/B=555-688"/>
</dbReference>
<dbReference type="PDB" id="5PPB">
    <property type="method" value="X-ray"/>
    <property type="resolution" value="1.48 A"/>
    <property type="chains" value="A/B=555-688"/>
</dbReference>
<dbReference type="PDB" id="5PPC">
    <property type="method" value="X-ray"/>
    <property type="resolution" value="1.61 A"/>
    <property type="chains" value="A/B=555-688"/>
</dbReference>
<dbReference type="PDB" id="5PPD">
    <property type="method" value="X-ray"/>
    <property type="resolution" value="1.67 A"/>
    <property type="chains" value="A/B=555-688"/>
</dbReference>
<dbReference type="PDB" id="5PPE">
    <property type="method" value="X-ray"/>
    <property type="resolution" value="1.46 A"/>
    <property type="chains" value="A/B=555-688"/>
</dbReference>
<dbReference type="PDB" id="5PPF">
    <property type="method" value="X-ray"/>
    <property type="resolution" value="1.64 A"/>
    <property type="chains" value="A/B=555-688"/>
</dbReference>
<dbReference type="PDB" id="5PPG">
    <property type="method" value="X-ray"/>
    <property type="resolution" value="1.55 A"/>
    <property type="chains" value="A/B=555-688"/>
</dbReference>
<dbReference type="PDB" id="5PPH">
    <property type="method" value="X-ray"/>
    <property type="resolution" value="1.89 A"/>
    <property type="chains" value="A/B=555-688"/>
</dbReference>
<dbReference type="PDB" id="5PPI">
    <property type="method" value="X-ray"/>
    <property type="resolution" value="1.56 A"/>
    <property type="chains" value="A/B=555-688"/>
</dbReference>
<dbReference type="PDB" id="5PPJ">
    <property type="method" value="X-ray"/>
    <property type="resolution" value="1.61 A"/>
    <property type="chains" value="A/B=555-688"/>
</dbReference>
<dbReference type="PDB" id="5PPK">
    <property type="method" value="X-ray"/>
    <property type="resolution" value="1.87 A"/>
    <property type="chains" value="A/B=555-688"/>
</dbReference>
<dbReference type="PDB" id="5PPL">
    <property type="method" value="X-ray"/>
    <property type="resolution" value="1.63 A"/>
    <property type="chains" value="A/B=555-688"/>
</dbReference>
<dbReference type="PDB" id="5PPM">
    <property type="method" value="X-ray"/>
    <property type="resolution" value="1.87 A"/>
    <property type="chains" value="A/B=555-688"/>
</dbReference>
<dbReference type="PDB" id="5PPN">
    <property type="method" value="X-ray"/>
    <property type="resolution" value="1.80 A"/>
    <property type="chains" value="A/B=555-688"/>
</dbReference>
<dbReference type="PDB" id="5PPO">
    <property type="method" value="X-ray"/>
    <property type="resolution" value="1.84 A"/>
    <property type="chains" value="A/B=555-688"/>
</dbReference>
<dbReference type="PDB" id="5PPP">
    <property type="method" value="X-ray"/>
    <property type="resolution" value="1.68 A"/>
    <property type="chains" value="A/B=555-688"/>
</dbReference>
<dbReference type="PDB" id="5PPQ">
    <property type="method" value="X-ray"/>
    <property type="resolution" value="1.70 A"/>
    <property type="chains" value="A/B=555-688"/>
</dbReference>
<dbReference type="PDB" id="5PPR">
    <property type="method" value="X-ray"/>
    <property type="resolution" value="2.69 A"/>
    <property type="chains" value="A/B=555-688"/>
</dbReference>
<dbReference type="PDB" id="5PPS">
    <property type="method" value="X-ray"/>
    <property type="resolution" value="1.53 A"/>
    <property type="chains" value="A/B=555-688"/>
</dbReference>
<dbReference type="PDB" id="5PPT">
    <property type="method" value="X-ray"/>
    <property type="resolution" value="1.61 A"/>
    <property type="chains" value="A/B=555-688"/>
</dbReference>
<dbReference type="PDB" id="5PPU">
    <property type="method" value="X-ray"/>
    <property type="resolution" value="1.63 A"/>
    <property type="chains" value="A/B=555-688"/>
</dbReference>
<dbReference type="PDB" id="5PPV">
    <property type="method" value="X-ray"/>
    <property type="resolution" value="1.70 A"/>
    <property type="chains" value="A/B=555-688"/>
</dbReference>
<dbReference type="PDB" id="5PPW">
    <property type="method" value="X-ray"/>
    <property type="resolution" value="1.45 A"/>
    <property type="chains" value="A/B=555-688"/>
</dbReference>
<dbReference type="PDB" id="5PPX">
    <property type="method" value="X-ray"/>
    <property type="resolution" value="1.44 A"/>
    <property type="chains" value="A/B=555-688"/>
</dbReference>
<dbReference type="PDB" id="5PPY">
    <property type="method" value="X-ray"/>
    <property type="resolution" value="1.45 A"/>
    <property type="chains" value="A/B=555-688"/>
</dbReference>
<dbReference type="PDB" id="5PPZ">
    <property type="method" value="X-ray"/>
    <property type="resolution" value="1.55 A"/>
    <property type="chains" value="A/B=555-688"/>
</dbReference>
<dbReference type="PDB" id="5PQ0">
    <property type="method" value="X-ray"/>
    <property type="resolution" value="1.81 A"/>
    <property type="chains" value="A/B=555-688"/>
</dbReference>
<dbReference type="PDB" id="5PQ1">
    <property type="method" value="X-ray"/>
    <property type="resolution" value="1.55 A"/>
    <property type="chains" value="A/B=555-688"/>
</dbReference>
<dbReference type="PDB" id="5PQ2">
    <property type="method" value="X-ray"/>
    <property type="resolution" value="1.47 A"/>
    <property type="chains" value="A/B=555-688"/>
</dbReference>
<dbReference type="PDB" id="5PQ3">
    <property type="method" value="X-ray"/>
    <property type="resolution" value="1.72 A"/>
    <property type="chains" value="A/B=555-688"/>
</dbReference>
<dbReference type="PDB" id="5PQ4">
    <property type="method" value="X-ray"/>
    <property type="resolution" value="1.63 A"/>
    <property type="chains" value="A/B=555-688"/>
</dbReference>
<dbReference type="PDB" id="5PQ5">
    <property type="method" value="X-ray"/>
    <property type="resolution" value="1.60 A"/>
    <property type="chains" value="A/B=555-688"/>
</dbReference>
<dbReference type="PDB" id="5PQ6">
    <property type="method" value="X-ray"/>
    <property type="resolution" value="1.64 A"/>
    <property type="chains" value="A/B=555-688"/>
</dbReference>
<dbReference type="PDB" id="5PQ7">
    <property type="method" value="X-ray"/>
    <property type="resolution" value="1.56 A"/>
    <property type="chains" value="A/B=555-688"/>
</dbReference>
<dbReference type="PDB" id="5PQ8">
    <property type="method" value="X-ray"/>
    <property type="resolution" value="1.65 A"/>
    <property type="chains" value="A/B=555-688"/>
</dbReference>
<dbReference type="PDB" id="5PQ9">
    <property type="method" value="X-ray"/>
    <property type="resolution" value="1.60 A"/>
    <property type="chains" value="A/B=555-688"/>
</dbReference>
<dbReference type="PDB" id="5PQA">
    <property type="method" value="X-ray"/>
    <property type="resolution" value="1.78 A"/>
    <property type="chains" value="A/B=555-688"/>
</dbReference>
<dbReference type="PDB" id="5PQB">
    <property type="method" value="X-ray"/>
    <property type="resolution" value="1.58 A"/>
    <property type="chains" value="A/B=555-688"/>
</dbReference>
<dbReference type="PDB" id="5PQC">
    <property type="method" value="X-ray"/>
    <property type="resolution" value="1.45 A"/>
    <property type="chains" value="A/B=555-688"/>
</dbReference>
<dbReference type="PDB" id="5PQD">
    <property type="method" value="X-ray"/>
    <property type="resolution" value="1.65 A"/>
    <property type="chains" value="A/B=555-688"/>
</dbReference>
<dbReference type="PDB" id="5PQE">
    <property type="method" value="X-ray"/>
    <property type="resolution" value="1.53 A"/>
    <property type="chains" value="A/B=555-688"/>
</dbReference>
<dbReference type="PDB" id="5PQF">
    <property type="method" value="X-ray"/>
    <property type="resolution" value="1.65 A"/>
    <property type="chains" value="A/B=555-688"/>
</dbReference>
<dbReference type="PDB" id="5PQG">
    <property type="method" value="X-ray"/>
    <property type="resolution" value="1.82 A"/>
    <property type="chains" value="A/B=555-688"/>
</dbReference>
<dbReference type="PDB" id="5PQH">
    <property type="method" value="X-ray"/>
    <property type="resolution" value="1.52 A"/>
    <property type="chains" value="A/B=555-688"/>
</dbReference>
<dbReference type="PDB" id="5PQI">
    <property type="method" value="X-ray"/>
    <property type="resolution" value="1.33 A"/>
    <property type="chains" value="A/B=555-688"/>
</dbReference>
<dbReference type="PDB" id="5PQJ">
    <property type="method" value="X-ray"/>
    <property type="resolution" value="1.59 A"/>
    <property type="chains" value="A/B=555-688"/>
</dbReference>
<dbReference type="PDB" id="5PQK">
    <property type="method" value="X-ray"/>
    <property type="resolution" value="1.58 A"/>
    <property type="chains" value="A/B=555-688"/>
</dbReference>
<dbReference type="PDB" id="5PQL">
    <property type="method" value="X-ray"/>
    <property type="resolution" value="1.52 A"/>
    <property type="chains" value="A/B=555-688"/>
</dbReference>
<dbReference type="PDB" id="5PQM">
    <property type="method" value="X-ray"/>
    <property type="resolution" value="2.56 A"/>
    <property type="chains" value="A/B=555-688"/>
</dbReference>
<dbReference type="PDB" id="5PQN">
    <property type="method" value="X-ray"/>
    <property type="resolution" value="2.00 A"/>
    <property type="chains" value="A/B=555-688"/>
</dbReference>
<dbReference type="PDB" id="5PQO">
    <property type="method" value="X-ray"/>
    <property type="resolution" value="1.75 A"/>
    <property type="chains" value="A/B=555-688"/>
</dbReference>
<dbReference type="PDB" id="5PQP">
    <property type="method" value="X-ray"/>
    <property type="resolution" value="1.97 A"/>
    <property type="chains" value="A/B=555-688"/>
</dbReference>
<dbReference type="PDB" id="5PQQ">
    <property type="method" value="X-ray"/>
    <property type="resolution" value="2.30 A"/>
    <property type="chains" value="A/B=555-688"/>
</dbReference>
<dbReference type="PDB" id="5PQR">
    <property type="method" value="X-ray"/>
    <property type="resolution" value="2.43 A"/>
    <property type="chains" value="A/B=555-688"/>
</dbReference>
<dbReference type="PDB" id="5PQS">
    <property type="method" value="X-ray"/>
    <property type="resolution" value="1.82 A"/>
    <property type="chains" value="A/B=555-688"/>
</dbReference>
<dbReference type="PDB" id="5PQT">
    <property type="method" value="X-ray"/>
    <property type="resolution" value="1.89 A"/>
    <property type="chains" value="A/B=555-688"/>
</dbReference>
<dbReference type="PDB" id="5PQU">
    <property type="method" value="X-ray"/>
    <property type="resolution" value="2.00 A"/>
    <property type="chains" value="A/B=555-688"/>
</dbReference>
<dbReference type="PDB" id="5PQV">
    <property type="method" value="X-ray"/>
    <property type="resolution" value="1.97 A"/>
    <property type="chains" value="A/B=555-688"/>
</dbReference>
<dbReference type="PDB" id="5PQW">
    <property type="method" value="X-ray"/>
    <property type="resolution" value="2.00 A"/>
    <property type="chains" value="A/B=555-688"/>
</dbReference>
<dbReference type="PDB" id="5PQX">
    <property type="method" value="X-ray"/>
    <property type="resolution" value="1.95 A"/>
    <property type="chains" value="A/B=555-688"/>
</dbReference>
<dbReference type="PDB" id="5PQY">
    <property type="method" value="X-ray"/>
    <property type="resolution" value="1.89 A"/>
    <property type="chains" value="A/B=555-688"/>
</dbReference>
<dbReference type="PDB" id="5PQZ">
    <property type="method" value="X-ray"/>
    <property type="resolution" value="2.58 A"/>
    <property type="chains" value="A/B=555-688"/>
</dbReference>
<dbReference type="PDB" id="5PR0">
    <property type="method" value="X-ray"/>
    <property type="resolution" value="2.23 A"/>
    <property type="chains" value="A/B=555-688"/>
</dbReference>
<dbReference type="PDB" id="5PR1">
    <property type="method" value="X-ray"/>
    <property type="resolution" value="2.10 A"/>
    <property type="chains" value="A/B=555-688"/>
</dbReference>
<dbReference type="PDB" id="5PR2">
    <property type="method" value="X-ray"/>
    <property type="resolution" value="2.10 A"/>
    <property type="chains" value="A/B=555-688"/>
</dbReference>
<dbReference type="PDB" id="5PR4">
    <property type="method" value="X-ray"/>
    <property type="resolution" value="1.82 A"/>
    <property type="chains" value="A/B=555-688"/>
</dbReference>
<dbReference type="PDB" id="5PR5">
    <property type="method" value="X-ray"/>
    <property type="resolution" value="1.95 A"/>
    <property type="chains" value="A/B=555-688"/>
</dbReference>
<dbReference type="PDB" id="5PR6">
    <property type="method" value="X-ray"/>
    <property type="resolution" value="1.80 A"/>
    <property type="chains" value="A/B=555-688"/>
</dbReference>
<dbReference type="PDB" id="5PR7">
    <property type="method" value="X-ray"/>
    <property type="resolution" value="1.80 A"/>
    <property type="chains" value="A/B=555-688"/>
</dbReference>
<dbReference type="PDB" id="5PR8">
    <property type="method" value="X-ray"/>
    <property type="resolution" value="1.92 A"/>
    <property type="chains" value="A/B=555-688"/>
</dbReference>
<dbReference type="PDB" id="5PR9">
    <property type="method" value="X-ray"/>
    <property type="resolution" value="1.82 A"/>
    <property type="chains" value="A/B=555-688"/>
</dbReference>
<dbReference type="PDB" id="5PRA">
    <property type="method" value="X-ray"/>
    <property type="resolution" value="1.87 A"/>
    <property type="chains" value="A/B=555-688"/>
</dbReference>
<dbReference type="PDB" id="5PRB">
    <property type="method" value="X-ray"/>
    <property type="resolution" value="2.23 A"/>
    <property type="chains" value="A/B=555-688"/>
</dbReference>
<dbReference type="PDB" id="5PRD">
    <property type="method" value="X-ray"/>
    <property type="resolution" value="1.90 A"/>
    <property type="chains" value="A/B=555-688"/>
</dbReference>
<dbReference type="PDB" id="5PRE">
    <property type="method" value="X-ray"/>
    <property type="resolution" value="1.73 A"/>
    <property type="chains" value="A/B=555-688"/>
</dbReference>
<dbReference type="PDB" id="5PRF">
    <property type="method" value="X-ray"/>
    <property type="resolution" value="1.82 A"/>
    <property type="chains" value="A/B=555-688"/>
</dbReference>
<dbReference type="PDB" id="5PRG">
    <property type="method" value="X-ray"/>
    <property type="resolution" value="2.68 A"/>
    <property type="chains" value="A/B=555-688"/>
</dbReference>
<dbReference type="PDB" id="5PRH">
    <property type="method" value="X-ray"/>
    <property type="resolution" value="1.95 A"/>
    <property type="chains" value="A/B=555-688"/>
</dbReference>
<dbReference type="PDB" id="5PRI">
    <property type="method" value="X-ray"/>
    <property type="resolution" value="1.90 A"/>
    <property type="chains" value="A/B=555-688"/>
</dbReference>
<dbReference type="PDB" id="5PRJ">
    <property type="method" value="X-ray"/>
    <property type="resolution" value="2.17 A"/>
    <property type="chains" value="A/B=555-688"/>
</dbReference>
<dbReference type="PDB" id="5PRK">
    <property type="method" value="X-ray"/>
    <property type="resolution" value="2.23 A"/>
    <property type="chains" value="A/B=555-688"/>
</dbReference>
<dbReference type="PDB" id="5PRL">
    <property type="method" value="X-ray"/>
    <property type="resolution" value="1.75 A"/>
    <property type="chains" value="A/B=555-688"/>
</dbReference>
<dbReference type="PDB" id="5PRM">
    <property type="method" value="X-ray"/>
    <property type="resolution" value="3.58 A"/>
    <property type="chains" value="A/B=555-688"/>
</dbReference>
<dbReference type="PDB" id="5PRO">
    <property type="method" value="X-ray"/>
    <property type="resolution" value="1.55 A"/>
    <property type="chains" value="A/B=555-688"/>
</dbReference>
<dbReference type="PDB" id="5PRP">
    <property type="method" value="X-ray"/>
    <property type="resolution" value="1.45 A"/>
    <property type="chains" value="A/B=555-688"/>
</dbReference>
<dbReference type="PDB" id="5PRQ">
    <property type="method" value="X-ray"/>
    <property type="resolution" value="1.68 A"/>
    <property type="chains" value="A/B=555-688"/>
</dbReference>
<dbReference type="PDB" id="5PRR">
    <property type="method" value="X-ray"/>
    <property type="resolution" value="1.63 A"/>
    <property type="chains" value="A/B=555-688"/>
</dbReference>
<dbReference type="PDB" id="5PRS">
    <property type="method" value="X-ray"/>
    <property type="resolution" value="1.72 A"/>
    <property type="chains" value="A/B=555-688"/>
</dbReference>
<dbReference type="PDB" id="5PRT">
    <property type="method" value="X-ray"/>
    <property type="resolution" value="1.89 A"/>
    <property type="chains" value="A/B=555-688"/>
</dbReference>
<dbReference type="PDB" id="5PRU">
    <property type="method" value="X-ray"/>
    <property type="resolution" value="1.58 A"/>
    <property type="chains" value="A/B=555-688"/>
</dbReference>
<dbReference type="PDB" id="5PRV">
    <property type="method" value="X-ray"/>
    <property type="resolution" value="1.62 A"/>
    <property type="chains" value="A/B=555-688"/>
</dbReference>
<dbReference type="PDB" id="5PRW">
    <property type="method" value="X-ray"/>
    <property type="resolution" value="1.65 A"/>
    <property type="chains" value="A/B=555-688"/>
</dbReference>
<dbReference type="PDB" id="5PRX">
    <property type="method" value="X-ray"/>
    <property type="resolution" value="1.87 A"/>
    <property type="chains" value="A/B=555-688"/>
</dbReference>
<dbReference type="PDB" id="5PRY">
    <property type="method" value="X-ray"/>
    <property type="resolution" value="1.80 A"/>
    <property type="chains" value="A/B=555-688"/>
</dbReference>
<dbReference type="PDB" id="5PRZ">
    <property type="method" value="X-ray"/>
    <property type="resolution" value="1.62 A"/>
    <property type="chains" value="A/B=555-688"/>
</dbReference>
<dbReference type="PDB" id="5PS0">
    <property type="method" value="X-ray"/>
    <property type="resolution" value="1.68 A"/>
    <property type="chains" value="A/B=555-688"/>
</dbReference>
<dbReference type="PDB" id="5PS1">
    <property type="method" value="X-ray"/>
    <property type="resolution" value="1.71 A"/>
    <property type="chains" value="A/B=555-688"/>
</dbReference>
<dbReference type="PDB" id="5PS2">
    <property type="method" value="X-ray"/>
    <property type="resolution" value="1.55 A"/>
    <property type="chains" value="A/B=555-688"/>
</dbReference>
<dbReference type="PDB" id="5PS3">
    <property type="method" value="X-ray"/>
    <property type="resolution" value="1.93 A"/>
    <property type="chains" value="A/B=555-688"/>
</dbReference>
<dbReference type="PDB" id="5PS4">
    <property type="method" value="X-ray"/>
    <property type="resolution" value="1.70 A"/>
    <property type="chains" value="A/B=555-688"/>
</dbReference>
<dbReference type="PDB" id="5PS5">
    <property type="method" value="X-ray"/>
    <property type="resolution" value="2.15 A"/>
    <property type="chains" value="A/B=555-688"/>
</dbReference>
<dbReference type="PDB" id="5PS6">
    <property type="method" value="X-ray"/>
    <property type="resolution" value="1.52 A"/>
    <property type="chains" value="A/B=555-688"/>
</dbReference>
<dbReference type="PDB" id="5PS7">
    <property type="method" value="X-ray"/>
    <property type="resolution" value="2.21 A"/>
    <property type="chains" value="A/B=555-688"/>
</dbReference>
<dbReference type="PDB" id="5PS8">
    <property type="method" value="X-ray"/>
    <property type="resolution" value="1.93 A"/>
    <property type="chains" value="A/B=555-688"/>
</dbReference>
<dbReference type="PDB" id="5PS9">
    <property type="method" value="X-ray"/>
    <property type="resolution" value="1.71 A"/>
    <property type="chains" value="A/B=555-688"/>
</dbReference>
<dbReference type="PDB" id="5PSA">
    <property type="method" value="X-ray"/>
    <property type="resolution" value="1.64 A"/>
    <property type="chains" value="A/B=555-688"/>
</dbReference>
<dbReference type="PDB" id="5PSB">
    <property type="method" value="X-ray"/>
    <property type="resolution" value="1.62 A"/>
    <property type="chains" value="A/B=555-688"/>
</dbReference>
<dbReference type="PDB" id="5PSC">
    <property type="method" value="X-ray"/>
    <property type="resolution" value="1.68 A"/>
    <property type="chains" value="A/B=555-688"/>
</dbReference>
<dbReference type="PDB" id="5PSD">
    <property type="method" value="X-ray"/>
    <property type="resolution" value="1.63 A"/>
    <property type="chains" value="A/B=555-688"/>
</dbReference>
<dbReference type="PDB" id="5PSE">
    <property type="method" value="X-ray"/>
    <property type="resolution" value="2.19 A"/>
    <property type="chains" value="A/B=555-688"/>
</dbReference>
<dbReference type="PDB" id="5PSF">
    <property type="method" value="X-ray"/>
    <property type="resolution" value="2.31 A"/>
    <property type="chains" value="A/B=555-688"/>
</dbReference>
<dbReference type="PDB" id="5PSG">
    <property type="method" value="X-ray"/>
    <property type="resolution" value="1.55 A"/>
    <property type="chains" value="A/B=555-688"/>
</dbReference>
<dbReference type="PDB" id="5PSH">
    <property type="method" value="X-ray"/>
    <property type="resolution" value="3.43 A"/>
    <property type="chains" value="A/B=555-688"/>
</dbReference>
<dbReference type="PDB" id="5PSI">
    <property type="method" value="X-ray"/>
    <property type="resolution" value="1.62 A"/>
    <property type="chains" value="A/B=555-688"/>
</dbReference>
<dbReference type="PDB" id="5PSJ">
    <property type="method" value="X-ray"/>
    <property type="resolution" value="1.38 A"/>
    <property type="chains" value="A/B=555-688"/>
</dbReference>
<dbReference type="PDB" id="5PSK">
    <property type="method" value="X-ray"/>
    <property type="resolution" value="1.38 A"/>
    <property type="chains" value="A/B=555-688"/>
</dbReference>
<dbReference type="PDB" id="5PSL">
    <property type="method" value="X-ray"/>
    <property type="resolution" value="1.39 A"/>
    <property type="chains" value="A/B=555-688"/>
</dbReference>
<dbReference type="PDB" id="5PSM">
    <property type="method" value="X-ray"/>
    <property type="resolution" value="1.53 A"/>
    <property type="chains" value="A/B=555-688"/>
</dbReference>
<dbReference type="PDB" id="5PSN">
    <property type="method" value="X-ray"/>
    <property type="resolution" value="1.48 A"/>
    <property type="chains" value="A/B=555-688"/>
</dbReference>
<dbReference type="PDB" id="5PSO">
    <property type="method" value="X-ray"/>
    <property type="resolution" value="1.55 A"/>
    <property type="chains" value="A/B=555-688"/>
</dbReference>
<dbReference type="PDB" id="5PSP">
    <property type="method" value="X-ray"/>
    <property type="resolution" value="1.58 A"/>
    <property type="chains" value="A/B=555-688"/>
</dbReference>
<dbReference type="PDB" id="5PSQ">
    <property type="method" value="X-ray"/>
    <property type="resolution" value="1.43 A"/>
    <property type="chains" value="A/B=555-688"/>
</dbReference>
<dbReference type="PDB" id="5PSR">
    <property type="method" value="X-ray"/>
    <property type="resolution" value="1.59 A"/>
    <property type="chains" value="A/B=555-688"/>
</dbReference>
<dbReference type="PDB" id="5PSS">
    <property type="method" value="X-ray"/>
    <property type="resolution" value="1.59 A"/>
    <property type="chains" value="A/B=555-688"/>
</dbReference>
<dbReference type="PDB" id="5PST">
    <property type="method" value="X-ray"/>
    <property type="resolution" value="1.39 A"/>
    <property type="chains" value="A/B=555-688"/>
</dbReference>
<dbReference type="PDB" id="5PSU">
    <property type="method" value="X-ray"/>
    <property type="resolution" value="1.56 A"/>
    <property type="chains" value="A/B=555-688"/>
</dbReference>
<dbReference type="PDB" id="5PSV">
    <property type="method" value="X-ray"/>
    <property type="resolution" value="1.53 A"/>
    <property type="chains" value="A/B=555-688"/>
</dbReference>
<dbReference type="PDB" id="5PSW">
    <property type="method" value="X-ray"/>
    <property type="resolution" value="1.53 A"/>
    <property type="chains" value="A/B=555-688"/>
</dbReference>
<dbReference type="PDB" id="5PSX">
    <property type="method" value="X-ray"/>
    <property type="resolution" value="1.59 A"/>
    <property type="chains" value="A/B=555-688"/>
</dbReference>
<dbReference type="PDB" id="5PSY">
    <property type="method" value="X-ray"/>
    <property type="resolution" value="1.82 A"/>
    <property type="chains" value="A/B=555-688"/>
</dbReference>
<dbReference type="PDB" id="5PSZ">
    <property type="method" value="X-ray"/>
    <property type="resolution" value="1.53 A"/>
    <property type="chains" value="A/B=555-688"/>
</dbReference>
<dbReference type="PDB" id="5PT0">
    <property type="method" value="X-ray"/>
    <property type="resolution" value="1.43 A"/>
    <property type="chains" value="A/B=555-688"/>
</dbReference>
<dbReference type="PDB" id="5PT1">
    <property type="method" value="X-ray"/>
    <property type="resolution" value="1.54 A"/>
    <property type="chains" value="A/B=555-688"/>
</dbReference>
<dbReference type="PDB" id="5PT2">
    <property type="method" value="X-ray"/>
    <property type="resolution" value="1.52 A"/>
    <property type="chains" value="A/B=555-688"/>
</dbReference>
<dbReference type="PDB" id="5PT3">
    <property type="method" value="X-ray"/>
    <property type="resolution" value="1.70 A"/>
    <property type="chains" value="A/B=555-688"/>
</dbReference>
<dbReference type="PDB" id="5PT4">
    <property type="method" value="X-ray"/>
    <property type="resolution" value="1.54 A"/>
    <property type="chains" value="A/B=555-688"/>
</dbReference>
<dbReference type="PDB" id="5PT5">
    <property type="method" value="X-ray"/>
    <property type="resolution" value="1.76 A"/>
    <property type="chains" value="A/B=555-688"/>
</dbReference>
<dbReference type="PDB" id="5PT6">
    <property type="method" value="X-ray"/>
    <property type="resolution" value="1.53 A"/>
    <property type="chains" value="A/B=555-688"/>
</dbReference>
<dbReference type="PDB" id="5PT7">
    <property type="method" value="X-ray"/>
    <property type="resolution" value="1.55 A"/>
    <property type="chains" value="A/B=555-688"/>
</dbReference>
<dbReference type="PDB" id="5PT8">
    <property type="method" value="X-ray"/>
    <property type="resolution" value="1.66 A"/>
    <property type="chains" value="A/B=555-688"/>
</dbReference>
<dbReference type="PDB" id="5PT9">
    <property type="method" value="X-ray"/>
    <property type="resolution" value="1.47 A"/>
    <property type="chains" value="A/B=555-688"/>
</dbReference>
<dbReference type="PDB" id="5PTA">
    <property type="method" value="X-ray"/>
    <property type="resolution" value="2.19 A"/>
    <property type="chains" value="A/B=555-688"/>
</dbReference>
<dbReference type="PDB" id="5PTB">
    <property type="method" value="X-ray"/>
    <property type="resolution" value="1.88 A"/>
    <property type="chains" value="A/B=555-688"/>
</dbReference>
<dbReference type="PDB" id="5PTC">
    <property type="method" value="X-ray"/>
    <property type="resolution" value="1.78 A"/>
    <property type="chains" value="A/B=555-688"/>
</dbReference>
<dbReference type="PDB" id="5PTE">
    <property type="method" value="X-ray"/>
    <property type="resolution" value="1.63 A"/>
    <property type="chains" value="A/B=555-688"/>
</dbReference>
<dbReference type="PDB" id="5PTF">
    <property type="method" value="X-ray"/>
    <property type="resolution" value="1.49 A"/>
    <property type="chains" value="A/B=555-688"/>
</dbReference>
<dbReference type="PDB" id="5PTG">
    <property type="method" value="X-ray"/>
    <property type="resolution" value="1.46 A"/>
    <property type="chains" value="A/B=555-688"/>
</dbReference>
<dbReference type="PDB" id="5PTH">
    <property type="method" value="X-ray"/>
    <property type="resolution" value="1.56 A"/>
    <property type="chains" value="A/B=555-688"/>
</dbReference>
<dbReference type="PDB" id="5PTJ">
    <property type="method" value="X-ray"/>
    <property type="resolution" value="1.69 A"/>
    <property type="chains" value="A/B=555-688"/>
</dbReference>
<dbReference type="PDB" id="5PTK">
    <property type="method" value="X-ray"/>
    <property type="resolution" value="1.48 A"/>
    <property type="chains" value="A/B=555-688"/>
</dbReference>
<dbReference type="PDB" id="5PTL">
    <property type="method" value="X-ray"/>
    <property type="resolution" value="1.53 A"/>
    <property type="chains" value="A/B=555-688"/>
</dbReference>
<dbReference type="PDB" id="5PTM">
    <property type="method" value="X-ray"/>
    <property type="resolution" value="1.41 A"/>
    <property type="chains" value="A/B=555-688"/>
</dbReference>
<dbReference type="PDB" id="5PTN">
    <property type="method" value="X-ray"/>
    <property type="resolution" value="1.47 A"/>
    <property type="chains" value="A/B=555-688"/>
</dbReference>
<dbReference type="PDB" id="5PTO">
    <property type="method" value="X-ray"/>
    <property type="resolution" value="1.67 A"/>
    <property type="chains" value="A/B=555-688"/>
</dbReference>
<dbReference type="PDB" id="5PTQ">
    <property type="method" value="X-ray"/>
    <property type="resolution" value="1.49 A"/>
    <property type="chains" value="A/B=555-688"/>
</dbReference>
<dbReference type="PDB" id="5PTR">
    <property type="method" value="X-ray"/>
    <property type="resolution" value="1.52 A"/>
    <property type="chains" value="A/B=555-688"/>
</dbReference>
<dbReference type="PDB" id="5PTS">
    <property type="method" value="X-ray"/>
    <property type="resolution" value="1.45 A"/>
    <property type="chains" value="A/B=555-688"/>
</dbReference>
<dbReference type="PDB" id="5PTT">
    <property type="method" value="X-ray"/>
    <property type="resolution" value="1.47 A"/>
    <property type="chains" value="A/B=555-688"/>
</dbReference>
<dbReference type="PDB" id="5PTU">
    <property type="method" value="X-ray"/>
    <property type="resolution" value="1.69 A"/>
    <property type="chains" value="A/B=555-688"/>
</dbReference>
<dbReference type="PDB" id="5PTV">
    <property type="method" value="X-ray"/>
    <property type="resolution" value="1.70 A"/>
    <property type="chains" value="A/B=555-688"/>
</dbReference>
<dbReference type="PDB" id="5PTW">
    <property type="method" value="X-ray"/>
    <property type="resolution" value="1.82 A"/>
    <property type="chains" value="A/B=555-688"/>
</dbReference>
<dbReference type="PDB" id="5PTX">
    <property type="method" value="X-ray"/>
    <property type="resolution" value="1.60 A"/>
    <property type="chains" value="A/B=555-688"/>
</dbReference>
<dbReference type="PDB" id="5PTY">
    <property type="method" value="X-ray"/>
    <property type="resolution" value="2.10 A"/>
    <property type="chains" value="A/B=555-688"/>
</dbReference>
<dbReference type="PDB" id="5PTZ">
    <property type="method" value="X-ray"/>
    <property type="resolution" value="1.51 A"/>
    <property type="chains" value="A/B=555-688"/>
</dbReference>
<dbReference type="PDB" id="5PU0">
    <property type="method" value="X-ray"/>
    <property type="resolution" value="1.89 A"/>
    <property type="chains" value="A/B=555-688"/>
</dbReference>
<dbReference type="PDB" id="5PU1">
    <property type="method" value="X-ray"/>
    <property type="resolution" value="1.73 A"/>
    <property type="chains" value="A/B=555-688"/>
</dbReference>
<dbReference type="PDB" id="5PU2">
    <property type="method" value="X-ray"/>
    <property type="resolution" value="1.59 A"/>
    <property type="chains" value="A/B=555-688"/>
</dbReference>
<dbReference type="PDB" id="5PU3">
    <property type="method" value="X-ray"/>
    <property type="resolution" value="2.37 A"/>
    <property type="chains" value="A/B=555-688"/>
</dbReference>
<dbReference type="PDB" id="5PU4">
    <property type="method" value="X-ray"/>
    <property type="resolution" value="1.55 A"/>
    <property type="chains" value="A/B=555-688"/>
</dbReference>
<dbReference type="PDB" id="5PU5">
    <property type="method" value="X-ray"/>
    <property type="resolution" value="1.55 A"/>
    <property type="chains" value="A/B=555-688"/>
</dbReference>
<dbReference type="PDB" id="5PU6">
    <property type="method" value="X-ray"/>
    <property type="resolution" value="1.74 A"/>
    <property type="chains" value="A/B=555-688"/>
</dbReference>
<dbReference type="PDB" id="5PU7">
    <property type="method" value="X-ray"/>
    <property type="resolution" value="1.62 A"/>
    <property type="chains" value="A/B=555-688"/>
</dbReference>
<dbReference type="PDB" id="5PU8">
    <property type="method" value="X-ray"/>
    <property type="resolution" value="1.55 A"/>
    <property type="chains" value="A/B=555-688"/>
</dbReference>
<dbReference type="PDB" id="5PU9">
    <property type="method" value="X-ray"/>
    <property type="resolution" value="1.56 A"/>
    <property type="chains" value="A/B=555-688"/>
</dbReference>
<dbReference type="PDB" id="5PUA">
    <property type="method" value="X-ray"/>
    <property type="resolution" value="1.63 A"/>
    <property type="chains" value="A/B=555-688"/>
</dbReference>
<dbReference type="PDB" id="5PUB">
    <property type="method" value="X-ray"/>
    <property type="resolution" value="2.23 A"/>
    <property type="chains" value="A/B=555-688"/>
</dbReference>
<dbReference type="PDB" id="5PUC">
    <property type="method" value="X-ray"/>
    <property type="resolution" value="1.64 A"/>
    <property type="chains" value="A/B=555-688"/>
</dbReference>
<dbReference type="PDB" id="5PUD">
    <property type="method" value="X-ray"/>
    <property type="resolution" value="2.01 A"/>
    <property type="chains" value="A/B=555-688"/>
</dbReference>
<dbReference type="PDB" id="5PUE">
    <property type="method" value="X-ray"/>
    <property type="resolution" value="1.70 A"/>
    <property type="chains" value="A/B=555-688"/>
</dbReference>
<dbReference type="PDB" id="5PUF">
    <property type="method" value="X-ray"/>
    <property type="resolution" value="1.82 A"/>
    <property type="chains" value="A/B=555-688"/>
</dbReference>
<dbReference type="PDB" id="5PUG">
    <property type="method" value="X-ray"/>
    <property type="resolution" value="2.00 A"/>
    <property type="chains" value="A/B=555-688"/>
</dbReference>
<dbReference type="PDB" id="5PUH">
    <property type="method" value="X-ray"/>
    <property type="resolution" value="1.92 A"/>
    <property type="chains" value="A/B=555-688"/>
</dbReference>
<dbReference type="PDB" id="5PUI">
    <property type="method" value="X-ray"/>
    <property type="resolution" value="1.51 A"/>
    <property type="chains" value="A/B=555-688"/>
</dbReference>
<dbReference type="PDB" id="5PUJ">
    <property type="method" value="X-ray"/>
    <property type="resolution" value="1.90 A"/>
    <property type="chains" value="A/B=555-688"/>
</dbReference>
<dbReference type="PDB" id="5PUK">
    <property type="method" value="X-ray"/>
    <property type="resolution" value="1.64 A"/>
    <property type="chains" value="A/B=555-688"/>
</dbReference>
<dbReference type="PDB" id="5PUL">
    <property type="method" value="X-ray"/>
    <property type="resolution" value="1.95 A"/>
    <property type="chains" value="A/B=555-688"/>
</dbReference>
<dbReference type="PDB" id="5PUM">
    <property type="method" value="X-ray"/>
    <property type="resolution" value="2.15 A"/>
    <property type="chains" value="A/B=555-688"/>
</dbReference>
<dbReference type="PDB" id="5PUN">
    <property type="method" value="X-ray"/>
    <property type="resolution" value="1.84 A"/>
    <property type="chains" value="A/B=555-688"/>
</dbReference>
<dbReference type="PDB" id="5PUO">
    <property type="method" value="X-ray"/>
    <property type="resolution" value="2.06 A"/>
    <property type="chains" value="A/B=555-688"/>
</dbReference>
<dbReference type="PDB" id="5PUP">
    <property type="method" value="X-ray"/>
    <property type="resolution" value="1.60 A"/>
    <property type="chains" value="A/B=555-688"/>
</dbReference>
<dbReference type="PDB" id="5PUQ">
    <property type="method" value="X-ray"/>
    <property type="resolution" value="1.70 A"/>
    <property type="chains" value="A/B=555-688"/>
</dbReference>
<dbReference type="PDB" id="5PUR">
    <property type="method" value="X-ray"/>
    <property type="resolution" value="1.73 A"/>
    <property type="chains" value="A/B=555-688"/>
</dbReference>
<dbReference type="PDB" id="5PUS">
    <property type="method" value="X-ray"/>
    <property type="resolution" value="1.67 A"/>
    <property type="chains" value="A/B=555-688"/>
</dbReference>
<dbReference type="PDB" id="5PUT">
    <property type="method" value="X-ray"/>
    <property type="resolution" value="2.32 A"/>
    <property type="chains" value="A/B=555-688"/>
</dbReference>
<dbReference type="PDB" id="5PUU">
    <property type="method" value="X-ray"/>
    <property type="resolution" value="1.69 A"/>
    <property type="chains" value="A/B=555-688"/>
</dbReference>
<dbReference type="PDB" id="5PUV">
    <property type="method" value="X-ray"/>
    <property type="resolution" value="1.69 A"/>
    <property type="chains" value="A/B=555-688"/>
</dbReference>
<dbReference type="PDB" id="5PUW">
    <property type="method" value="X-ray"/>
    <property type="resolution" value="1.82 A"/>
    <property type="chains" value="A/B=555-688"/>
</dbReference>
<dbReference type="PDB" id="5PUX">
    <property type="method" value="X-ray"/>
    <property type="resolution" value="1.51 A"/>
    <property type="chains" value="A/B=555-688"/>
</dbReference>
<dbReference type="PDB" id="5PUY">
    <property type="method" value="X-ray"/>
    <property type="resolution" value="2.01 A"/>
    <property type="chains" value="A/B=555-688"/>
</dbReference>
<dbReference type="PDB" id="5PUZ">
    <property type="method" value="X-ray"/>
    <property type="resolution" value="1.49 A"/>
    <property type="chains" value="A/B=555-688"/>
</dbReference>
<dbReference type="PDB" id="5PV0">
    <property type="method" value="X-ray"/>
    <property type="resolution" value="1.76 A"/>
    <property type="chains" value="A/B=555-688"/>
</dbReference>
<dbReference type="PDB" id="5PV1">
    <property type="method" value="X-ray"/>
    <property type="resolution" value="1.73 A"/>
    <property type="chains" value="A/B=555-688"/>
</dbReference>
<dbReference type="PDB" id="5PV2">
    <property type="method" value="X-ray"/>
    <property type="resolution" value="1.63 A"/>
    <property type="chains" value="A/B=555-688"/>
</dbReference>
<dbReference type="PDB" id="5PV3">
    <property type="method" value="X-ray"/>
    <property type="resolution" value="1.48 A"/>
    <property type="chains" value="A/B=555-688"/>
</dbReference>
<dbReference type="PDB" id="5PV4">
    <property type="method" value="X-ray"/>
    <property type="resolution" value="1.58 A"/>
    <property type="chains" value="A/B=555-688"/>
</dbReference>
<dbReference type="PDB" id="5PV5">
    <property type="method" value="X-ray"/>
    <property type="resolution" value="1.68 A"/>
    <property type="chains" value="A/B=555-688"/>
</dbReference>
<dbReference type="PDB" id="5PV6">
    <property type="method" value="X-ray"/>
    <property type="resolution" value="1.62 A"/>
    <property type="chains" value="A/B=555-688"/>
</dbReference>
<dbReference type="PDB" id="5PV7">
    <property type="method" value="X-ray"/>
    <property type="resolution" value="1.58 A"/>
    <property type="chains" value="A/B=555-688"/>
</dbReference>
<dbReference type="PDB" id="5PV8">
    <property type="method" value="X-ray"/>
    <property type="resolution" value="1.49 A"/>
    <property type="chains" value="A/B=555-688"/>
</dbReference>
<dbReference type="PDB" id="5PV9">
    <property type="method" value="X-ray"/>
    <property type="resolution" value="1.67 A"/>
    <property type="chains" value="A/B=555-688"/>
</dbReference>
<dbReference type="PDB" id="5PVA">
    <property type="method" value="X-ray"/>
    <property type="resolution" value="1.98 A"/>
    <property type="chains" value="A/B=555-688"/>
</dbReference>
<dbReference type="PDB" id="5PVB">
    <property type="method" value="X-ray"/>
    <property type="resolution" value="1.53 A"/>
    <property type="chains" value="A/B=555-688"/>
</dbReference>
<dbReference type="PDB" id="5PVC">
    <property type="method" value="X-ray"/>
    <property type="resolution" value="1.56 A"/>
    <property type="chains" value="A/B=555-688"/>
</dbReference>
<dbReference type="PDB" id="5PVD">
    <property type="method" value="X-ray"/>
    <property type="resolution" value="1.53 A"/>
    <property type="chains" value="A/B=555-688"/>
</dbReference>
<dbReference type="PDB" id="5PVE">
    <property type="method" value="X-ray"/>
    <property type="resolution" value="2.29 A"/>
    <property type="chains" value="A/B=555-688"/>
</dbReference>
<dbReference type="PDB" id="5PVF">
    <property type="method" value="X-ray"/>
    <property type="resolution" value="1.71 A"/>
    <property type="chains" value="A/B=555-688"/>
</dbReference>
<dbReference type="PDB" id="5PVG">
    <property type="method" value="X-ray"/>
    <property type="resolution" value="1.69 A"/>
    <property type="chains" value="A/B=555-688"/>
</dbReference>
<dbReference type="PDB" id="5PVH">
    <property type="method" value="X-ray"/>
    <property type="resolution" value="1.69 A"/>
    <property type="chains" value="A/B=555-688"/>
</dbReference>
<dbReference type="PDB" id="5PVI">
    <property type="method" value="X-ray"/>
    <property type="resolution" value="2.19 A"/>
    <property type="chains" value="A/B=555-688"/>
</dbReference>
<dbReference type="PDB" id="5PVJ">
    <property type="method" value="X-ray"/>
    <property type="resolution" value="1.57 A"/>
    <property type="chains" value="A/B=555-688"/>
</dbReference>
<dbReference type="PDB" id="5PVK">
    <property type="method" value="X-ray"/>
    <property type="resolution" value="1.58 A"/>
    <property type="chains" value="A/B=555-688"/>
</dbReference>
<dbReference type="PDB" id="5PVL">
    <property type="method" value="X-ray"/>
    <property type="resolution" value="1.53 A"/>
    <property type="chains" value="A/B=555-688"/>
</dbReference>
<dbReference type="PDB" id="5PVM">
    <property type="method" value="X-ray"/>
    <property type="resolution" value="1.65 A"/>
    <property type="chains" value="A/B=555-688"/>
</dbReference>
<dbReference type="PDB" id="5PVN">
    <property type="method" value="X-ray"/>
    <property type="resolution" value="1.63 A"/>
    <property type="chains" value="A/B=555-688"/>
</dbReference>
<dbReference type="PDB" id="5PVO">
    <property type="method" value="X-ray"/>
    <property type="resolution" value="1.96 A"/>
    <property type="chains" value="A/B=555-688"/>
</dbReference>
<dbReference type="PDB" id="5PVP">
    <property type="method" value="X-ray"/>
    <property type="resolution" value="1.69 A"/>
    <property type="chains" value="A/B=555-688"/>
</dbReference>
<dbReference type="PDB" id="5PVQ">
    <property type="method" value="X-ray"/>
    <property type="resolution" value="1.61 A"/>
    <property type="chains" value="A/B=555-688"/>
</dbReference>
<dbReference type="PDB" id="5PVR">
    <property type="method" value="X-ray"/>
    <property type="resolution" value="1.57 A"/>
    <property type="chains" value="A/B=555-688"/>
</dbReference>
<dbReference type="PDB" id="5PVS">
    <property type="method" value="X-ray"/>
    <property type="resolution" value="1.55 A"/>
    <property type="chains" value="A/B=555-688"/>
</dbReference>
<dbReference type="PDB" id="5PVT">
    <property type="method" value="X-ray"/>
    <property type="resolution" value="1.48 A"/>
    <property type="chains" value="A/B=555-688"/>
</dbReference>
<dbReference type="PDB" id="5PVU">
    <property type="method" value="X-ray"/>
    <property type="resolution" value="3.01 A"/>
    <property type="chains" value="A/B=555-688"/>
</dbReference>
<dbReference type="PDB" id="5PVV">
    <property type="method" value="X-ray"/>
    <property type="resolution" value="1.80 A"/>
    <property type="chains" value="A/B=555-688"/>
</dbReference>
<dbReference type="PDB" id="5PVW">
    <property type="method" value="X-ray"/>
    <property type="resolution" value="2.18 A"/>
    <property type="chains" value="A/B=555-688"/>
</dbReference>
<dbReference type="PDB" id="5PVX">
    <property type="method" value="X-ray"/>
    <property type="resolution" value="1.74 A"/>
    <property type="chains" value="A/B=555-688"/>
</dbReference>
<dbReference type="PDB" id="5PVY">
    <property type="method" value="X-ray"/>
    <property type="resolution" value="2.49 A"/>
    <property type="chains" value="A/B=555-688"/>
</dbReference>
<dbReference type="PDB" id="5PVZ">
    <property type="method" value="X-ray"/>
    <property type="resolution" value="1.64 A"/>
    <property type="chains" value="A/B=555-688"/>
</dbReference>
<dbReference type="PDB" id="5PW0">
    <property type="method" value="X-ray"/>
    <property type="resolution" value="2.13 A"/>
    <property type="chains" value="A/B=555-688"/>
</dbReference>
<dbReference type="PDB" id="5PW1">
    <property type="method" value="X-ray"/>
    <property type="resolution" value="1.57 A"/>
    <property type="chains" value="A/B=555-688"/>
</dbReference>
<dbReference type="PDB" id="5PW2">
    <property type="method" value="X-ray"/>
    <property type="resolution" value="2.32 A"/>
    <property type="chains" value="A/B=555-688"/>
</dbReference>
<dbReference type="PDB" id="5PW3">
    <property type="method" value="X-ray"/>
    <property type="resolution" value="2.21 A"/>
    <property type="chains" value="A/B=555-688"/>
</dbReference>
<dbReference type="PDB" id="5PW4">
    <property type="method" value="X-ray"/>
    <property type="resolution" value="1.91 A"/>
    <property type="chains" value="A/B=555-688"/>
</dbReference>
<dbReference type="PDB" id="5PW5">
    <property type="method" value="X-ray"/>
    <property type="resolution" value="2.09 A"/>
    <property type="chains" value="A/B=555-688"/>
</dbReference>
<dbReference type="PDB" id="5PW6">
    <property type="method" value="X-ray"/>
    <property type="resolution" value="2.75 A"/>
    <property type="chains" value="A/B=555-688"/>
</dbReference>
<dbReference type="PDB" id="5PW7">
    <property type="method" value="X-ray"/>
    <property type="resolution" value="1.85 A"/>
    <property type="chains" value="A/B=555-688"/>
</dbReference>
<dbReference type="PDB" id="5PW8">
    <property type="method" value="X-ray"/>
    <property type="resolution" value="2.08 A"/>
    <property type="chains" value="A/B=555-688"/>
</dbReference>
<dbReference type="PDB" id="5PW9">
    <property type="method" value="X-ray"/>
    <property type="resolution" value="3.44 A"/>
    <property type="chains" value="A/B=555-688"/>
</dbReference>
<dbReference type="PDB" id="5PWA">
    <property type="method" value="X-ray"/>
    <property type="resolution" value="1.86 A"/>
    <property type="chains" value="A/B=555-688"/>
</dbReference>
<dbReference type="PDB" id="5PWB">
    <property type="method" value="X-ray"/>
    <property type="resolution" value="2.09 A"/>
    <property type="chains" value="A/B=555-688"/>
</dbReference>
<dbReference type="PDB" id="6IN2">
    <property type="method" value="X-ray"/>
    <property type="resolution" value="1.75 A"/>
    <property type="chains" value="A=563-680"/>
</dbReference>
<dbReference type="PDB" id="6MAJ">
    <property type="method" value="X-ray"/>
    <property type="resolution" value="2.14 A"/>
    <property type="chains" value="B=31-80"/>
</dbReference>
<dbReference type="PDB" id="6MAK">
    <property type="method" value="X-ray"/>
    <property type="resolution" value="2.13 A"/>
    <property type="chains" value="B=31-80"/>
</dbReference>
<dbReference type="PDB" id="7D0O">
    <property type="method" value="X-ray"/>
    <property type="resolution" value="2.51 A"/>
    <property type="chains" value="B=31-80"/>
</dbReference>
<dbReference type="PDB" id="7D0P">
    <property type="method" value="X-ray"/>
    <property type="resolution" value="1.80 A"/>
    <property type="chains" value="B=31-80"/>
</dbReference>
<dbReference type="PDB" id="7D0Q">
    <property type="method" value="X-ray"/>
    <property type="resolution" value="2.21 A"/>
    <property type="chains" value="B=31-80"/>
</dbReference>
<dbReference type="PDB" id="7D0R">
    <property type="method" value="X-ray"/>
    <property type="resolution" value="1.95 A"/>
    <property type="chains" value="B=31-80"/>
</dbReference>
<dbReference type="PDB" id="7D0S">
    <property type="method" value="X-ray"/>
    <property type="resolution" value="2.30 A"/>
    <property type="chains" value="B=31-80"/>
</dbReference>
<dbReference type="PDB" id="7LH9">
    <property type="method" value="X-ray"/>
    <property type="resolution" value="2.60 A"/>
    <property type="chains" value="A/B/C/D=925-1049"/>
</dbReference>
<dbReference type="PDBsum" id="2KU3"/>
<dbReference type="PDBsum" id="2L43"/>
<dbReference type="PDBsum" id="2LQ6"/>
<dbReference type="PDBsum" id="3LYI"/>
<dbReference type="PDBsum" id="3RCW"/>
<dbReference type="PDBsum" id="4Z02"/>
<dbReference type="PDBsum" id="5AME"/>
<dbReference type="PDBsum" id="5AMF"/>
<dbReference type="PDBsum" id="5FG6"/>
<dbReference type="PDBsum" id="5GK9"/>
<dbReference type="PDBsum" id="5N49"/>
<dbReference type="PDBsum" id="5PNX"/>
<dbReference type="PDBsum" id="5PNY"/>
<dbReference type="PDBsum" id="5PNZ"/>
<dbReference type="PDBsum" id="5PO0"/>
<dbReference type="PDBsum" id="5PO1"/>
<dbReference type="PDBsum" id="5PO2"/>
<dbReference type="PDBsum" id="5PO3"/>
<dbReference type="PDBsum" id="5PO4"/>
<dbReference type="PDBsum" id="5PO5"/>
<dbReference type="PDBsum" id="5PO6"/>
<dbReference type="PDBsum" id="5PO7"/>
<dbReference type="PDBsum" id="5PO8"/>
<dbReference type="PDBsum" id="5PO9"/>
<dbReference type="PDBsum" id="5POA"/>
<dbReference type="PDBsum" id="5POB"/>
<dbReference type="PDBsum" id="5POC"/>
<dbReference type="PDBsum" id="5POD"/>
<dbReference type="PDBsum" id="5POE"/>
<dbReference type="PDBsum" id="5POF"/>
<dbReference type="PDBsum" id="5POG"/>
<dbReference type="PDBsum" id="5POH"/>
<dbReference type="PDBsum" id="5POI"/>
<dbReference type="PDBsum" id="5POJ"/>
<dbReference type="PDBsum" id="5POK"/>
<dbReference type="PDBsum" id="5POL"/>
<dbReference type="PDBsum" id="5POM"/>
<dbReference type="PDBsum" id="5PON"/>
<dbReference type="PDBsum" id="5POO"/>
<dbReference type="PDBsum" id="5POP"/>
<dbReference type="PDBsum" id="5POQ"/>
<dbReference type="PDBsum" id="5POR"/>
<dbReference type="PDBsum" id="5POS"/>
<dbReference type="PDBsum" id="5POT"/>
<dbReference type="PDBsum" id="5POU"/>
<dbReference type="PDBsum" id="5POV"/>
<dbReference type="PDBsum" id="5POW"/>
<dbReference type="PDBsum" id="5POX"/>
<dbReference type="PDBsum" id="5POY"/>
<dbReference type="PDBsum" id="5POZ"/>
<dbReference type="PDBsum" id="5PP0"/>
<dbReference type="PDBsum" id="5PP1"/>
<dbReference type="PDBsum" id="5PP2"/>
<dbReference type="PDBsum" id="5PP3"/>
<dbReference type="PDBsum" id="5PP4"/>
<dbReference type="PDBsum" id="5PP5"/>
<dbReference type="PDBsum" id="5PP6"/>
<dbReference type="PDBsum" id="5PP7"/>
<dbReference type="PDBsum" id="5PP8"/>
<dbReference type="PDBsum" id="5PP9"/>
<dbReference type="PDBsum" id="5PPA"/>
<dbReference type="PDBsum" id="5PPB"/>
<dbReference type="PDBsum" id="5PPC"/>
<dbReference type="PDBsum" id="5PPD"/>
<dbReference type="PDBsum" id="5PPE"/>
<dbReference type="PDBsum" id="5PPF"/>
<dbReference type="PDBsum" id="5PPG"/>
<dbReference type="PDBsum" id="5PPH"/>
<dbReference type="PDBsum" id="5PPI"/>
<dbReference type="PDBsum" id="5PPJ"/>
<dbReference type="PDBsum" id="5PPK"/>
<dbReference type="PDBsum" id="5PPL"/>
<dbReference type="PDBsum" id="5PPM"/>
<dbReference type="PDBsum" id="5PPN"/>
<dbReference type="PDBsum" id="5PPO"/>
<dbReference type="PDBsum" id="5PPP"/>
<dbReference type="PDBsum" id="5PPQ"/>
<dbReference type="PDBsum" id="5PPR"/>
<dbReference type="PDBsum" id="5PPS"/>
<dbReference type="PDBsum" id="5PPT"/>
<dbReference type="PDBsum" id="5PPU"/>
<dbReference type="PDBsum" id="5PPV"/>
<dbReference type="PDBsum" id="5PPW"/>
<dbReference type="PDBsum" id="5PPX"/>
<dbReference type="PDBsum" id="5PPY"/>
<dbReference type="PDBsum" id="5PPZ"/>
<dbReference type="PDBsum" id="5PQ0"/>
<dbReference type="PDBsum" id="5PQ1"/>
<dbReference type="PDBsum" id="5PQ2"/>
<dbReference type="PDBsum" id="5PQ3"/>
<dbReference type="PDBsum" id="5PQ4"/>
<dbReference type="PDBsum" id="5PQ5"/>
<dbReference type="PDBsum" id="5PQ6"/>
<dbReference type="PDBsum" id="5PQ7"/>
<dbReference type="PDBsum" id="5PQ8"/>
<dbReference type="PDBsum" id="5PQ9"/>
<dbReference type="PDBsum" id="5PQA"/>
<dbReference type="PDBsum" id="5PQB"/>
<dbReference type="PDBsum" id="5PQC"/>
<dbReference type="PDBsum" id="5PQD"/>
<dbReference type="PDBsum" id="5PQE"/>
<dbReference type="PDBsum" id="5PQF"/>
<dbReference type="PDBsum" id="5PQG"/>
<dbReference type="PDBsum" id="5PQH"/>
<dbReference type="PDBsum" id="5PQI"/>
<dbReference type="PDBsum" id="5PQJ"/>
<dbReference type="PDBsum" id="5PQK"/>
<dbReference type="PDBsum" id="5PQL"/>
<dbReference type="PDBsum" id="5PQM"/>
<dbReference type="PDBsum" id="5PQN"/>
<dbReference type="PDBsum" id="5PQO"/>
<dbReference type="PDBsum" id="5PQP"/>
<dbReference type="PDBsum" id="5PQQ"/>
<dbReference type="PDBsum" id="5PQR"/>
<dbReference type="PDBsum" id="5PQS"/>
<dbReference type="PDBsum" id="5PQT"/>
<dbReference type="PDBsum" id="5PQU"/>
<dbReference type="PDBsum" id="5PQV"/>
<dbReference type="PDBsum" id="5PQW"/>
<dbReference type="PDBsum" id="5PQX"/>
<dbReference type="PDBsum" id="5PQY"/>
<dbReference type="PDBsum" id="5PQZ"/>
<dbReference type="PDBsum" id="5PR0"/>
<dbReference type="PDBsum" id="5PR1"/>
<dbReference type="PDBsum" id="5PR2"/>
<dbReference type="PDBsum" id="5PR4"/>
<dbReference type="PDBsum" id="5PR5"/>
<dbReference type="PDBsum" id="5PR6"/>
<dbReference type="PDBsum" id="5PR7"/>
<dbReference type="PDBsum" id="5PR8"/>
<dbReference type="PDBsum" id="5PR9"/>
<dbReference type="PDBsum" id="5PRA"/>
<dbReference type="PDBsum" id="5PRB"/>
<dbReference type="PDBsum" id="5PRD"/>
<dbReference type="PDBsum" id="5PRE"/>
<dbReference type="PDBsum" id="5PRF"/>
<dbReference type="PDBsum" id="5PRG"/>
<dbReference type="PDBsum" id="5PRH"/>
<dbReference type="PDBsum" id="5PRI"/>
<dbReference type="PDBsum" id="5PRJ"/>
<dbReference type="PDBsum" id="5PRK"/>
<dbReference type="PDBsum" id="5PRL"/>
<dbReference type="PDBsum" id="5PRM"/>
<dbReference type="PDBsum" id="5PRO"/>
<dbReference type="PDBsum" id="5PRP"/>
<dbReference type="PDBsum" id="5PRQ"/>
<dbReference type="PDBsum" id="5PRR"/>
<dbReference type="PDBsum" id="5PRS"/>
<dbReference type="PDBsum" id="5PRT"/>
<dbReference type="PDBsum" id="5PRU"/>
<dbReference type="PDBsum" id="5PRV"/>
<dbReference type="PDBsum" id="5PRW"/>
<dbReference type="PDBsum" id="5PRX"/>
<dbReference type="PDBsum" id="5PRY"/>
<dbReference type="PDBsum" id="5PRZ"/>
<dbReference type="PDBsum" id="5PS0"/>
<dbReference type="PDBsum" id="5PS1"/>
<dbReference type="PDBsum" id="5PS2"/>
<dbReference type="PDBsum" id="5PS3"/>
<dbReference type="PDBsum" id="5PS4"/>
<dbReference type="PDBsum" id="5PS5"/>
<dbReference type="PDBsum" id="5PS6"/>
<dbReference type="PDBsum" id="5PS7"/>
<dbReference type="PDBsum" id="5PS8"/>
<dbReference type="PDBsum" id="5PS9"/>
<dbReference type="PDBsum" id="5PSA"/>
<dbReference type="PDBsum" id="5PSB"/>
<dbReference type="PDBsum" id="5PSC"/>
<dbReference type="PDBsum" id="5PSD"/>
<dbReference type="PDBsum" id="5PSE"/>
<dbReference type="PDBsum" id="5PSF"/>
<dbReference type="PDBsum" id="5PSG"/>
<dbReference type="PDBsum" id="5PSH"/>
<dbReference type="PDBsum" id="5PSI"/>
<dbReference type="PDBsum" id="5PSJ"/>
<dbReference type="PDBsum" id="5PSK"/>
<dbReference type="PDBsum" id="5PSL"/>
<dbReference type="PDBsum" id="5PSM"/>
<dbReference type="PDBsum" id="5PSN"/>
<dbReference type="PDBsum" id="5PSO"/>
<dbReference type="PDBsum" id="5PSP"/>
<dbReference type="PDBsum" id="5PSQ"/>
<dbReference type="PDBsum" id="5PSR"/>
<dbReference type="PDBsum" id="5PSS"/>
<dbReference type="PDBsum" id="5PST"/>
<dbReference type="PDBsum" id="5PSU"/>
<dbReference type="PDBsum" id="5PSV"/>
<dbReference type="PDBsum" id="5PSW"/>
<dbReference type="PDBsum" id="5PSX"/>
<dbReference type="PDBsum" id="5PSY"/>
<dbReference type="PDBsum" id="5PSZ"/>
<dbReference type="PDBsum" id="5PT0"/>
<dbReference type="PDBsum" id="5PT1"/>
<dbReference type="PDBsum" id="5PT2"/>
<dbReference type="PDBsum" id="5PT3"/>
<dbReference type="PDBsum" id="5PT4"/>
<dbReference type="PDBsum" id="5PT5"/>
<dbReference type="PDBsum" id="5PT6"/>
<dbReference type="PDBsum" id="5PT7"/>
<dbReference type="PDBsum" id="5PT8"/>
<dbReference type="PDBsum" id="5PT9"/>
<dbReference type="PDBsum" id="5PTA"/>
<dbReference type="PDBsum" id="5PTB"/>
<dbReference type="PDBsum" id="5PTC"/>
<dbReference type="PDBsum" id="5PTE"/>
<dbReference type="PDBsum" id="5PTF"/>
<dbReference type="PDBsum" id="5PTG"/>
<dbReference type="PDBsum" id="5PTH"/>
<dbReference type="PDBsum" id="5PTJ"/>
<dbReference type="PDBsum" id="5PTK"/>
<dbReference type="PDBsum" id="5PTL"/>
<dbReference type="PDBsum" id="5PTM"/>
<dbReference type="PDBsum" id="5PTN"/>
<dbReference type="PDBsum" id="5PTO"/>
<dbReference type="PDBsum" id="5PTQ"/>
<dbReference type="PDBsum" id="5PTR"/>
<dbReference type="PDBsum" id="5PTS"/>
<dbReference type="PDBsum" id="5PTT"/>
<dbReference type="PDBsum" id="5PTU"/>
<dbReference type="PDBsum" id="5PTV"/>
<dbReference type="PDBsum" id="5PTW"/>
<dbReference type="PDBsum" id="5PTX"/>
<dbReference type="PDBsum" id="5PTY"/>
<dbReference type="PDBsum" id="5PTZ"/>
<dbReference type="PDBsum" id="5PU0"/>
<dbReference type="PDBsum" id="5PU1"/>
<dbReference type="PDBsum" id="5PU2"/>
<dbReference type="PDBsum" id="5PU3"/>
<dbReference type="PDBsum" id="5PU4"/>
<dbReference type="PDBsum" id="5PU5"/>
<dbReference type="PDBsum" id="5PU6"/>
<dbReference type="PDBsum" id="5PU7"/>
<dbReference type="PDBsum" id="5PU8"/>
<dbReference type="PDBsum" id="5PU9"/>
<dbReference type="PDBsum" id="5PUA"/>
<dbReference type="PDBsum" id="5PUB"/>
<dbReference type="PDBsum" id="5PUC"/>
<dbReference type="PDBsum" id="5PUD"/>
<dbReference type="PDBsum" id="5PUE"/>
<dbReference type="PDBsum" id="5PUF"/>
<dbReference type="PDBsum" id="5PUG"/>
<dbReference type="PDBsum" id="5PUH"/>
<dbReference type="PDBsum" id="5PUI"/>
<dbReference type="PDBsum" id="5PUJ"/>
<dbReference type="PDBsum" id="5PUK"/>
<dbReference type="PDBsum" id="5PUL"/>
<dbReference type="PDBsum" id="5PUM"/>
<dbReference type="PDBsum" id="5PUN"/>
<dbReference type="PDBsum" id="5PUO"/>
<dbReference type="PDBsum" id="5PUP"/>
<dbReference type="PDBsum" id="5PUQ"/>
<dbReference type="PDBsum" id="5PUR"/>
<dbReference type="PDBsum" id="5PUS"/>
<dbReference type="PDBsum" id="5PUT"/>
<dbReference type="PDBsum" id="5PUU"/>
<dbReference type="PDBsum" id="5PUV"/>
<dbReference type="PDBsum" id="5PUW"/>
<dbReference type="PDBsum" id="5PUX"/>
<dbReference type="PDBsum" id="5PUY"/>
<dbReference type="PDBsum" id="5PUZ"/>
<dbReference type="PDBsum" id="5PV0"/>
<dbReference type="PDBsum" id="5PV1"/>
<dbReference type="PDBsum" id="5PV2"/>
<dbReference type="PDBsum" id="5PV3"/>
<dbReference type="PDBsum" id="5PV4"/>
<dbReference type="PDBsum" id="5PV5"/>
<dbReference type="PDBsum" id="5PV6"/>
<dbReference type="PDBsum" id="5PV7"/>
<dbReference type="PDBsum" id="5PV8"/>
<dbReference type="PDBsum" id="5PV9"/>
<dbReference type="PDBsum" id="5PVA"/>
<dbReference type="PDBsum" id="5PVB"/>
<dbReference type="PDBsum" id="5PVC"/>
<dbReference type="PDBsum" id="5PVD"/>
<dbReference type="PDBsum" id="5PVE"/>
<dbReference type="PDBsum" id="5PVF"/>
<dbReference type="PDBsum" id="5PVG"/>
<dbReference type="PDBsum" id="5PVH"/>
<dbReference type="PDBsum" id="5PVI"/>
<dbReference type="PDBsum" id="5PVJ"/>
<dbReference type="PDBsum" id="5PVK"/>
<dbReference type="PDBsum" id="5PVL"/>
<dbReference type="PDBsum" id="5PVM"/>
<dbReference type="PDBsum" id="5PVN"/>
<dbReference type="PDBsum" id="5PVO"/>
<dbReference type="PDBsum" id="5PVP"/>
<dbReference type="PDBsum" id="5PVQ"/>
<dbReference type="PDBsum" id="5PVR"/>
<dbReference type="PDBsum" id="5PVS"/>
<dbReference type="PDBsum" id="5PVT"/>
<dbReference type="PDBsum" id="5PVU"/>
<dbReference type="PDBsum" id="5PVV"/>
<dbReference type="PDBsum" id="5PVW"/>
<dbReference type="PDBsum" id="5PVX"/>
<dbReference type="PDBsum" id="5PVY"/>
<dbReference type="PDBsum" id="5PVZ"/>
<dbReference type="PDBsum" id="5PW0"/>
<dbReference type="PDBsum" id="5PW1"/>
<dbReference type="PDBsum" id="5PW2"/>
<dbReference type="PDBsum" id="5PW3"/>
<dbReference type="PDBsum" id="5PW4"/>
<dbReference type="PDBsum" id="5PW5"/>
<dbReference type="PDBsum" id="5PW6"/>
<dbReference type="PDBsum" id="5PW7"/>
<dbReference type="PDBsum" id="5PW8"/>
<dbReference type="PDBsum" id="5PW9"/>
<dbReference type="PDBsum" id="5PWA"/>
<dbReference type="PDBsum" id="5PWB"/>
<dbReference type="PDBsum" id="6IN2"/>
<dbReference type="PDBsum" id="6MAJ"/>
<dbReference type="PDBsum" id="6MAK"/>
<dbReference type="PDBsum" id="7D0O"/>
<dbReference type="PDBsum" id="7D0P"/>
<dbReference type="PDBsum" id="7D0Q"/>
<dbReference type="PDBsum" id="7D0R"/>
<dbReference type="PDBsum" id="7D0S"/>
<dbReference type="PDBsum" id="7LH9"/>
<dbReference type="BMRB" id="O95696"/>
<dbReference type="SMR" id="O95696"/>
<dbReference type="BioGRID" id="117273">
    <property type="interactions" value="349"/>
</dbReference>
<dbReference type="ComplexPortal" id="CPX-733">
    <property type="entry name" value="MOZ2 histone acetyltransferase complex"/>
</dbReference>
<dbReference type="ComplexPortal" id="CPX-739">
    <property type="entry name" value="MORF2 histone acetyltransferase complex"/>
</dbReference>
<dbReference type="CORUM" id="O95696"/>
<dbReference type="FunCoup" id="O95696">
    <property type="interactions" value="2398"/>
</dbReference>
<dbReference type="IntAct" id="O95696">
    <property type="interactions" value="81"/>
</dbReference>
<dbReference type="MINT" id="O95696"/>
<dbReference type="STRING" id="9606.ENSP00000410042"/>
<dbReference type="BindingDB" id="O95696"/>
<dbReference type="ChEMBL" id="CHEMBL2176774"/>
<dbReference type="GuidetoPHARMACOLOGY" id="2724"/>
<dbReference type="GlyGen" id="O95696">
    <property type="glycosylation" value="2 sites, 1 O-linked glycan (2 sites)"/>
</dbReference>
<dbReference type="iPTMnet" id="O95696"/>
<dbReference type="PhosphoSitePlus" id="O95696"/>
<dbReference type="SwissPalm" id="O95696"/>
<dbReference type="BioMuta" id="BRD1"/>
<dbReference type="OGP" id="O95696"/>
<dbReference type="jPOST" id="O95696"/>
<dbReference type="MassIVE" id="O95696"/>
<dbReference type="PaxDb" id="9606-ENSP00000216267"/>
<dbReference type="PeptideAtlas" id="O95696"/>
<dbReference type="ProteomicsDB" id="51000">
    <molecule id="O95696-1"/>
</dbReference>
<dbReference type="ProteomicsDB" id="51001">
    <molecule id="O95696-2"/>
</dbReference>
<dbReference type="Pumba" id="O95696"/>
<dbReference type="ABCD" id="O95696">
    <property type="antibodies" value="5 sequenced antibodies"/>
</dbReference>
<dbReference type="Antibodypedia" id="251">
    <property type="antibodies" value="182 antibodies from 24 providers"/>
</dbReference>
<dbReference type="DNASU" id="23774"/>
<dbReference type="Ensembl" id="ENST00000216267.12">
    <molecule id="O95696-1"/>
    <property type="protein sequence ID" value="ENSP00000216267.8"/>
    <property type="gene ID" value="ENSG00000100425.20"/>
</dbReference>
<dbReference type="Ensembl" id="ENST00000404034.5">
    <molecule id="O95696-1"/>
    <property type="protein sequence ID" value="ENSP00000384076.1"/>
    <property type="gene ID" value="ENSG00000100425.20"/>
</dbReference>
<dbReference type="Ensembl" id="ENST00000404760.6">
    <molecule id="O95696-2"/>
    <property type="protein sequence ID" value="ENSP00000385858.1"/>
    <property type="gene ID" value="ENSG00000100425.20"/>
</dbReference>
<dbReference type="Ensembl" id="ENST00000457780.3">
    <molecule id="O95696-2"/>
    <property type="protein sequence ID" value="ENSP00000410042.3"/>
    <property type="gene ID" value="ENSG00000100425.20"/>
</dbReference>
<dbReference type="GeneID" id="23774"/>
<dbReference type="KEGG" id="hsa:23774"/>
<dbReference type="MANE-Select" id="ENST00000404760.6">
    <molecule id="O95696-2"/>
    <property type="protein sequence ID" value="ENSP00000385858.1"/>
    <property type="RefSeq nucleotide sequence ID" value="NM_001304808.3"/>
    <property type="RefSeq protein sequence ID" value="NP_001291737.1"/>
</dbReference>
<dbReference type="UCSC" id="uc003biu.6">
    <molecule id="O95696-1"/>
    <property type="organism name" value="human"/>
</dbReference>
<dbReference type="AGR" id="HGNC:1102"/>
<dbReference type="CTD" id="23774"/>
<dbReference type="DisGeNET" id="23774"/>
<dbReference type="GeneCards" id="BRD1"/>
<dbReference type="HGNC" id="HGNC:1102">
    <property type="gene designation" value="BRD1"/>
</dbReference>
<dbReference type="HPA" id="ENSG00000100425">
    <property type="expression patterns" value="Low tissue specificity"/>
</dbReference>
<dbReference type="MIM" id="604589">
    <property type="type" value="gene"/>
</dbReference>
<dbReference type="neXtProt" id="NX_O95696"/>
<dbReference type="OpenTargets" id="ENSG00000100425"/>
<dbReference type="PharmGKB" id="PA25413"/>
<dbReference type="VEuPathDB" id="HostDB:ENSG00000100425"/>
<dbReference type="eggNOG" id="KOG0955">
    <property type="taxonomic scope" value="Eukaryota"/>
</dbReference>
<dbReference type="GeneTree" id="ENSGT00940000157236"/>
<dbReference type="HOGENOM" id="CLU_003589_1_0_1"/>
<dbReference type="InParanoid" id="O95696"/>
<dbReference type="OMA" id="GMWISTD"/>
<dbReference type="OrthoDB" id="20839at2759"/>
<dbReference type="PAN-GO" id="O95696">
    <property type="GO annotations" value="2 GO annotations based on evolutionary models"/>
</dbReference>
<dbReference type="PhylomeDB" id="O95696"/>
<dbReference type="TreeFam" id="TF316118"/>
<dbReference type="PathwayCommons" id="O95696"/>
<dbReference type="Reactome" id="R-HSA-3214847">
    <property type="pathway name" value="HATs acetylate histones"/>
</dbReference>
<dbReference type="Reactome" id="R-HSA-6804758">
    <property type="pathway name" value="Regulation of TP53 Activity through Acetylation"/>
</dbReference>
<dbReference type="SignaLink" id="O95696"/>
<dbReference type="BioGRID-ORCS" id="23774">
    <property type="hits" value="81 hits in 1174 CRISPR screens"/>
</dbReference>
<dbReference type="ChiTaRS" id="BRD1">
    <property type="organism name" value="human"/>
</dbReference>
<dbReference type="EvolutionaryTrace" id="O95696"/>
<dbReference type="GenomeRNAi" id="23774"/>
<dbReference type="Pharos" id="O95696">
    <property type="development level" value="Tchem"/>
</dbReference>
<dbReference type="PRO" id="PR:O95696"/>
<dbReference type="Proteomes" id="UP000005640">
    <property type="component" value="Chromosome 22"/>
</dbReference>
<dbReference type="RNAct" id="O95696">
    <property type="molecule type" value="protein"/>
</dbReference>
<dbReference type="Bgee" id="ENSG00000100425">
    <property type="expression patterns" value="Expressed in oocyte and 209 other cell types or tissues"/>
</dbReference>
<dbReference type="ExpressionAtlas" id="O95696">
    <property type="expression patterns" value="baseline and differential"/>
</dbReference>
<dbReference type="GO" id="GO:0030425">
    <property type="term" value="C:dendrite"/>
    <property type="evidence" value="ECO:0007669"/>
    <property type="project" value="Ensembl"/>
</dbReference>
<dbReference type="GO" id="GO:0036409">
    <property type="term" value="C:histone H3-K14 acetyltransferase complex"/>
    <property type="evidence" value="ECO:0000314"/>
    <property type="project" value="UniProtKB"/>
</dbReference>
<dbReference type="GO" id="GO:0070776">
    <property type="term" value="C:MOZ/MORF histone acetyltransferase complex"/>
    <property type="evidence" value="ECO:0000314"/>
    <property type="project" value="UniProtKB"/>
</dbReference>
<dbReference type="GO" id="GO:0016607">
    <property type="term" value="C:nuclear speck"/>
    <property type="evidence" value="ECO:0000314"/>
    <property type="project" value="HPA"/>
</dbReference>
<dbReference type="GO" id="GO:0005634">
    <property type="term" value="C:nucleus"/>
    <property type="evidence" value="ECO:0000314"/>
    <property type="project" value="UniProtKB"/>
</dbReference>
<dbReference type="GO" id="GO:0043204">
    <property type="term" value="C:perikaryon"/>
    <property type="evidence" value="ECO:0007669"/>
    <property type="project" value="Ensembl"/>
</dbReference>
<dbReference type="GO" id="GO:0140566">
    <property type="term" value="F:histone reader activity"/>
    <property type="evidence" value="ECO:0000250"/>
    <property type="project" value="UniProtKB"/>
</dbReference>
<dbReference type="GO" id="GO:0140063">
    <property type="term" value="F:unmodified histone reader activity"/>
    <property type="evidence" value="ECO:0000314"/>
    <property type="project" value="UniProtKB"/>
</dbReference>
<dbReference type="GO" id="GO:0008270">
    <property type="term" value="F:zinc ion binding"/>
    <property type="evidence" value="ECO:0007669"/>
    <property type="project" value="UniProtKB-KW"/>
</dbReference>
<dbReference type="GO" id="GO:0006338">
    <property type="term" value="P:chromatin remodeling"/>
    <property type="evidence" value="ECO:0007669"/>
    <property type="project" value="GOC"/>
</dbReference>
<dbReference type="GO" id="GO:0043249">
    <property type="term" value="P:erythrocyte maturation"/>
    <property type="evidence" value="ECO:0007669"/>
    <property type="project" value="UniProtKB-KW"/>
</dbReference>
<dbReference type="GO" id="GO:0045648">
    <property type="term" value="P:positive regulation of erythrocyte differentiation"/>
    <property type="evidence" value="ECO:0000250"/>
    <property type="project" value="UniProtKB"/>
</dbReference>
<dbReference type="GO" id="GO:0050793">
    <property type="term" value="P:regulation of developmental process"/>
    <property type="evidence" value="ECO:0000303"/>
    <property type="project" value="ComplexPortal"/>
</dbReference>
<dbReference type="GO" id="GO:0006355">
    <property type="term" value="P:regulation of DNA-templated transcription"/>
    <property type="evidence" value="ECO:0000250"/>
    <property type="project" value="ComplexPortal"/>
</dbReference>
<dbReference type="GO" id="GO:1903706">
    <property type="term" value="P:regulation of hemopoiesis"/>
    <property type="evidence" value="ECO:0000303"/>
    <property type="project" value="ComplexPortal"/>
</dbReference>
<dbReference type="GO" id="GO:0006357">
    <property type="term" value="P:regulation of transcription by RNA polymerase II"/>
    <property type="evidence" value="ECO:0000318"/>
    <property type="project" value="GO_Central"/>
</dbReference>
<dbReference type="GO" id="GO:0051602">
    <property type="term" value="P:response to electrical stimulus"/>
    <property type="evidence" value="ECO:0007669"/>
    <property type="project" value="Ensembl"/>
</dbReference>
<dbReference type="GO" id="GO:0035902">
    <property type="term" value="P:response to immobilization stress"/>
    <property type="evidence" value="ECO:0007669"/>
    <property type="project" value="Ensembl"/>
</dbReference>
<dbReference type="CDD" id="cd05512">
    <property type="entry name" value="Bromo_brd1_like"/>
    <property type="match status" value="1"/>
</dbReference>
<dbReference type="CDD" id="cd15702">
    <property type="entry name" value="ePHD_BRPF2"/>
    <property type="match status" value="1"/>
</dbReference>
<dbReference type="CDD" id="cd15677">
    <property type="entry name" value="PHD_BRPF2"/>
    <property type="match status" value="1"/>
</dbReference>
<dbReference type="CDD" id="cd20157">
    <property type="entry name" value="PWWP_BRPF2"/>
    <property type="match status" value="1"/>
</dbReference>
<dbReference type="FunFam" id="3.30.40.10:FF:000008">
    <property type="entry name" value="Bromodomain containing 1, isoform CRA_a"/>
    <property type="match status" value="1"/>
</dbReference>
<dbReference type="FunFam" id="2.30.30.140:FF:000008">
    <property type="entry name" value="Bromodomain containing 1, isoform CRA_b"/>
    <property type="match status" value="1"/>
</dbReference>
<dbReference type="FunFam" id="3.30.40.10:FF:000007">
    <property type="entry name" value="Bromodomain containing 1, isoform CRA_b"/>
    <property type="match status" value="1"/>
</dbReference>
<dbReference type="FunFam" id="1.20.920.10:FF:000007">
    <property type="entry name" value="Bromodomain-containing protein 1"/>
    <property type="match status" value="1"/>
</dbReference>
<dbReference type="Gene3D" id="2.30.30.140">
    <property type="match status" value="1"/>
</dbReference>
<dbReference type="Gene3D" id="1.20.920.10">
    <property type="entry name" value="Bromodomain-like"/>
    <property type="match status" value="1"/>
</dbReference>
<dbReference type="Gene3D" id="3.30.40.10">
    <property type="entry name" value="Zinc/RING finger domain, C3HC4 (zinc finger)"/>
    <property type="match status" value="2"/>
</dbReference>
<dbReference type="InterPro" id="IPR001487">
    <property type="entry name" value="Bromodomain"/>
</dbReference>
<dbReference type="InterPro" id="IPR036427">
    <property type="entry name" value="Bromodomain-like_sf"/>
</dbReference>
<dbReference type="InterPro" id="IPR018359">
    <property type="entry name" value="Bromodomain_CS"/>
</dbReference>
<dbReference type="InterPro" id="IPR042004">
    <property type="entry name" value="BRPF2_ePHD"/>
</dbReference>
<dbReference type="InterPro" id="IPR042009">
    <property type="entry name" value="BRPF2_PHD"/>
</dbReference>
<dbReference type="InterPro" id="IPR019542">
    <property type="entry name" value="Enhancer_polycomb-like_N"/>
</dbReference>
<dbReference type="InterPro" id="IPR034732">
    <property type="entry name" value="EPHD"/>
</dbReference>
<dbReference type="InterPro" id="IPR050701">
    <property type="entry name" value="Histone_Mod_Regulator"/>
</dbReference>
<dbReference type="InterPro" id="IPR000313">
    <property type="entry name" value="PWWP_dom"/>
</dbReference>
<dbReference type="InterPro" id="IPR019786">
    <property type="entry name" value="Zinc_finger_PHD-type_CS"/>
</dbReference>
<dbReference type="InterPro" id="IPR011011">
    <property type="entry name" value="Znf_FYVE_PHD"/>
</dbReference>
<dbReference type="InterPro" id="IPR001965">
    <property type="entry name" value="Znf_PHD"/>
</dbReference>
<dbReference type="InterPro" id="IPR019787">
    <property type="entry name" value="Znf_PHD-finger"/>
</dbReference>
<dbReference type="InterPro" id="IPR013083">
    <property type="entry name" value="Znf_RING/FYVE/PHD"/>
</dbReference>
<dbReference type="PANTHER" id="PTHR13793:SF17">
    <property type="entry name" value="BROMODOMAIN-CONTAINING PROTEIN 1"/>
    <property type="match status" value="1"/>
</dbReference>
<dbReference type="PANTHER" id="PTHR13793">
    <property type="entry name" value="PHD FINGER PROTEINS"/>
    <property type="match status" value="1"/>
</dbReference>
<dbReference type="Pfam" id="PF00439">
    <property type="entry name" value="Bromodomain"/>
    <property type="match status" value="1"/>
</dbReference>
<dbReference type="Pfam" id="PF10513">
    <property type="entry name" value="EPL1"/>
    <property type="match status" value="1"/>
</dbReference>
<dbReference type="Pfam" id="PF13831">
    <property type="entry name" value="PHD_2"/>
    <property type="match status" value="1"/>
</dbReference>
<dbReference type="Pfam" id="PF00855">
    <property type="entry name" value="PWWP"/>
    <property type="match status" value="1"/>
</dbReference>
<dbReference type="Pfam" id="PF13832">
    <property type="entry name" value="zf-HC5HC2H_2"/>
    <property type="match status" value="1"/>
</dbReference>
<dbReference type="PRINTS" id="PR00503">
    <property type="entry name" value="BROMODOMAIN"/>
</dbReference>
<dbReference type="SMART" id="SM00297">
    <property type="entry name" value="BROMO"/>
    <property type="match status" value="1"/>
</dbReference>
<dbReference type="SMART" id="SM00249">
    <property type="entry name" value="PHD"/>
    <property type="match status" value="2"/>
</dbReference>
<dbReference type="SMART" id="SM00293">
    <property type="entry name" value="PWWP"/>
    <property type="match status" value="1"/>
</dbReference>
<dbReference type="SUPFAM" id="SSF47370">
    <property type="entry name" value="Bromodomain"/>
    <property type="match status" value="1"/>
</dbReference>
<dbReference type="SUPFAM" id="SSF57903">
    <property type="entry name" value="FYVE/PHD zinc finger"/>
    <property type="match status" value="1"/>
</dbReference>
<dbReference type="SUPFAM" id="SSF63748">
    <property type="entry name" value="Tudor/PWWP/MBT"/>
    <property type="match status" value="1"/>
</dbReference>
<dbReference type="PROSITE" id="PS00633">
    <property type="entry name" value="BROMODOMAIN_1"/>
    <property type="match status" value="1"/>
</dbReference>
<dbReference type="PROSITE" id="PS50014">
    <property type="entry name" value="BROMODOMAIN_2"/>
    <property type="match status" value="1"/>
</dbReference>
<dbReference type="PROSITE" id="PS51805">
    <property type="entry name" value="EPHD"/>
    <property type="match status" value="1"/>
</dbReference>
<dbReference type="PROSITE" id="PS50812">
    <property type="entry name" value="PWWP"/>
    <property type="match status" value="1"/>
</dbReference>
<dbReference type="PROSITE" id="PS01359">
    <property type="entry name" value="ZF_PHD_1"/>
    <property type="match status" value="1"/>
</dbReference>
<dbReference type="PROSITE" id="PS50016">
    <property type="entry name" value="ZF_PHD_2"/>
    <property type="match status" value="1"/>
</dbReference>
<name>BRD1_HUMAN</name>
<keyword id="KW-0002">3D-structure</keyword>
<keyword id="KW-0007">Acetylation</keyword>
<keyword id="KW-0025">Alternative splicing</keyword>
<keyword id="KW-0103">Bromodomain</keyword>
<keyword id="KW-0156">Chromatin regulator</keyword>
<keyword id="KW-0158">Chromosome</keyword>
<keyword id="KW-0265">Erythrocyte maturation</keyword>
<keyword id="KW-1017">Isopeptide bond</keyword>
<keyword id="KW-0479">Metal-binding</keyword>
<keyword id="KW-0539">Nucleus</keyword>
<keyword id="KW-0597">Phosphoprotein</keyword>
<keyword id="KW-1267">Proteomics identification</keyword>
<keyword id="KW-1185">Reference proteome</keyword>
<keyword id="KW-0677">Repeat</keyword>
<keyword id="KW-0832">Ubl conjugation</keyword>
<keyword id="KW-0862">Zinc</keyword>
<keyword id="KW-0863">Zinc-finger</keyword>
<organism>
    <name type="scientific">Homo sapiens</name>
    <name type="common">Human</name>
    <dbReference type="NCBI Taxonomy" id="9606"/>
    <lineage>
        <taxon>Eukaryota</taxon>
        <taxon>Metazoa</taxon>
        <taxon>Chordata</taxon>
        <taxon>Craniata</taxon>
        <taxon>Vertebrata</taxon>
        <taxon>Euteleostomi</taxon>
        <taxon>Mammalia</taxon>
        <taxon>Eutheria</taxon>
        <taxon>Euarchontoglires</taxon>
        <taxon>Primates</taxon>
        <taxon>Haplorrhini</taxon>
        <taxon>Catarrhini</taxon>
        <taxon>Hominidae</taxon>
        <taxon>Homo</taxon>
    </lineage>
</organism>